<name>PDE10_HUMAN</name>
<keyword id="KW-0002">3D-structure</keyword>
<keyword id="KW-0021">Allosteric enzyme</keyword>
<keyword id="KW-0024">Alternative initiation</keyword>
<keyword id="KW-0025">Alternative splicing</keyword>
<keyword id="KW-0114">cAMP</keyword>
<keyword id="KW-0116">cAMP-binding</keyword>
<keyword id="KW-0140">cGMP</keyword>
<keyword id="KW-0142">cGMP-binding</keyword>
<keyword id="KW-0963">Cytoplasm</keyword>
<keyword id="KW-0225">Disease variant</keyword>
<keyword id="KW-0378">Hydrolase</keyword>
<keyword id="KW-0479">Metal-binding</keyword>
<keyword id="KW-0547">Nucleotide-binding</keyword>
<keyword id="KW-0597">Phosphoprotein</keyword>
<keyword id="KW-1267">Proteomics identification</keyword>
<keyword id="KW-1185">Reference proteome</keyword>
<keyword id="KW-0677">Repeat</keyword>
<organism>
    <name type="scientific">Homo sapiens</name>
    <name type="common">Human</name>
    <dbReference type="NCBI Taxonomy" id="9606"/>
    <lineage>
        <taxon>Eukaryota</taxon>
        <taxon>Metazoa</taxon>
        <taxon>Chordata</taxon>
        <taxon>Craniata</taxon>
        <taxon>Vertebrata</taxon>
        <taxon>Euteleostomi</taxon>
        <taxon>Mammalia</taxon>
        <taxon>Eutheria</taxon>
        <taxon>Euarchontoglires</taxon>
        <taxon>Primates</taxon>
        <taxon>Haplorrhini</taxon>
        <taxon>Catarrhini</taxon>
        <taxon>Hominidae</taxon>
        <taxon>Homo</taxon>
    </lineage>
</organism>
<reference key="1">
    <citation type="journal article" date="1999" name="Biochem. Biophys. Res. Commun.">
        <title>Characterization and phosphorylation of PDE10A2, a novel alternative splice variant of human phosphodiesterase that hydrolyzes cAMP and cGMP.</title>
        <authorList>
            <person name="Kotera J."/>
            <person name="Fujishige K."/>
            <person name="Yuasa K."/>
            <person name="Omori K."/>
        </authorList>
    </citation>
    <scope>NUCLEOTIDE SEQUENCE [MRNA] (ISOFORM PDE10A2)</scope>
    <scope>SUBCELLULAR LOCATION</scope>
    <scope>PHOSPHORYLATION AT THR-282 BY PKA</scope>
    <source>
        <tissue>Fetal lung</tissue>
    </source>
</reference>
<reference key="2">
    <citation type="journal article" date="1999" name="J. Biol. Chem.">
        <title>Cloning and characterization of a novel human phosphodiesterase that hydrolyzes both cAMP and cGMP (PDE10A).</title>
        <authorList>
            <person name="Fujishige K."/>
            <person name="Kotera J."/>
            <person name="Michibata H."/>
            <person name="Yuasa K."/>
            <person name="Takebayashi S."/>
            <person name="Okumura K."/>
            <person name="Omori K."/>
        </authorList>
    </citation>
    <scope>NUCLEOTIDE SEQUENCE [MRNA] (ISOFORM PDE10A1)</scope>
    <scope>FUNCTION</scope>
    <scope>CATALYTIC ACTIVITY</scope>
    <scope>PATHWAY</scope>
    <scope>SUBCELLULAR LOCATION</scope>
    <source>
        <tissue>Fetal lung</tissue>
    </source>
</reference>
<reference key="3">
    <citation type="journal article" date="1999" name="Gene">
        <title>Isolation and characterization of PDE10A, a novel human 3',5'-cyclic nucleotide phosphodiesterase.</title>
        <authorList>
            <person name="Loughney K."/>
            <person name="Snyder P.B."/>
            <person name="Uher L."/>
            <person name="Rosman G.J."/>
            <person name="Ferguson K."/>
            <person name="Florio V.A."/>
        </authorList>
    </citation>
    <scope>NUCLEOTIDE SEQUENCE [MRNA] (ISOFORMS PDE10A1 AND PDE10A2)</scope>
    <scope>FUNCTION</scope>
    <scope>CATALYTIC ACTIVITY</scope>
    <scope>PATHWAY</scope>
    <source>
        <tissue>Fetal brain</tissue>
    </source>
</reference>
<reference key="4">
    <citation type="submission" date="2004-06" db="EMBL/GenBank/DDBJ databases">
        <title>Cloning of human full open reading frames in Gateway(TM) system entry vector (pDONR201).</title>
        <authorList>
            <person name="Ebert L."/>
            <person name="Schick M."/>
            <person name="Neubert P."/>
            <person name="Schatten R."/>
            <person name="Henze S."/>
            <person name="Korn B."/>
        </authorList>
    </citation>
    <scope>NUCLEOTIDE SEQUENCE [LARGE SCALE MRNA] (ISOFORM PDE10A1)</scope>
</reference>
<reference key="5">
    <citation type="journal article" date="2003" name="Nature">
        <title>The DNA sequence and analysis of human chromosome 6.</title>
        <authorList>
            <person name="Mungall A.J."/>
            <person name="Palmer S.A."/>
            <person name="Sims S.K."/>
            <person name="Edwards C.A."/>
            <person name="Ashurst J.L."/>
            <person name="Wilming L."/>
            <person name="Jones M.C."/>
            <person name="Horton R."/>
            <person name="Hunt S.E."/>
            <person name="Scott C.E."/>
            <person name="Gilbert J.G.R."/>
            <person name="Clamp M.E."/>
            <person name="Bethel G."/>
            <person name="Milne S."/>
            <person name="Ainscough R."/>
            <person name="Almeida J.P."/>
            <person name="Ambrose K.D."/>
            <person name="Andrews T.D."/>
            <person name="Ashwell R.I.S."/>
            <person name="Babbage A.K."/>
            <person name="Bagguley C.L."/>
            <person name="Bailey J."/>
            <person name="Banerjee R."/>
            <person name="Barker D.J."/>
            <person name="Barlow K.F."/>
            <person name="Bates K."/>
            <person name="Beare D.M."/>
            <person name="Beasley H."/>
            <person name="Beasley O."/>
            <person name="Bird C.P."/>
            <person name="Blakey S.E."/>
            <person name="Bray-Allen S."/>
            <person name="Brook J."/>
            <person name="Brown A.J."/>
            <person name="Brown J.Y."/>
            <person name="Burford D.C."/>
            <person name="Burrill W."/>
            <person name="Burton J."/>
            <person name="Carder C."/>
            <person name="Carter N.P."/>
            <person name="Chapman J.C."/>
            <person name="Clark S.Y."/>
            <person name="Clark G."/>
            <person name="Clee C.M."/>
            <person name="Clegg S."/>
            <person name="Cobley V."/>
            <person name="Collier R.E."/>
            <person name="Collins J.E."/>
            <person name="Colman L.K."/>
            <person name="Corby N.R."/>
            <person name="Coville G.J."/>
            <person name="Culley K.M."/>
            <person name="Dhami P."/>
            <person name="Davies J."/>
            <person name="Dunn M."/>
            <person name="Earthrowl M.E."/>
            <person name="Ellington A.E."/>
            <person name="Evans K.A."/>
            <person name="Faulkner L."/>
            <person name="Francis M.D."/>
            <person name="Frankish A."/>
            <person name="Frankland J."/>
            <person name="French L."/>
            <person name="Garner P."/>
            <person name="Garnett J."/>
            <person name="Ghori M.J."/>
            <person name="Gilby L.M."/>
            <person name="Gillson C.J."/>
            <person name="Glithero R.J."/>
            <person name="Grafham D.V."/>
            <person name="Grant M."/>
            <person name="Gribble S."/>
            <person name="Griffiths C."/>
            <person name="Griffiths M.N.D."/>
            <person name="Hall R."/>
            <person name="Halls K.S."/>
            <person name="Hammond S."/>
            <person name="Harley J.L."/>
            <person name="Hart E.A."/>
            <person name="Heath P.D."/>
            <person name="Heathcott R."/>
            <person name="Holmes S.J."/>
            <person name="Howden P.J."/>
            <person name="Howe K.L."/>
            <person name="Howell G.R."/>
            <person name="Huckle E."/>
            <person name="Humphray S.J."/>
            <person name="Humphries M.D."/>
            <person name="Hunt A.R."/>
            <person name="Johnson C.M."/>
            <person name="Joy A.A."/>
            <person name="Kay M."/>
            <person name="Keenan S.J."/>
            <person name="Kimberley A.M."/>
            <person name="King A."/>
            <person name="Laird G.K."/>
            <person name="Langford C."/>
            <person name="Lawlor S."/>
            <person name="Leongamornlert D.A."/>
            <person name="Leversha M."/>
            <person name="Lloyd C.R."/>
            <person name="Lloyd D.M."/>
            <person name="Loveland J.E."/>
            <person name="Lovell J."/>
            <person name="Martin S."/>
            <person name="Mashreghi-Mohammadi M."/>
            <person name="Maslen G.L."/>
            <person name="Matthews L."/>
            <person name="McCann O.T."/>
            <person name="McLaren S.J."/>
            <person name="McLay K."/>
            <person name="McMurray A."/>
            <person name="Moore M.J.F."/>
            <person name="Mullikin J.C."/>
            <person name="Niblett D."/>
            <person name="Nickerson T."/>
            <person name="Novik K.L."/>
            <person name="Oliver K."/>
            <person name="Overton-Larty E.K."/>
            <person name="Parker A."/>
            <person name="Patel R."/>
            <person name="Pearce A.V."/>
            <person name="Peck A.I."/>
            <person name="Phillimore B.J.C.T."/>
            <person name="Phillips S."/>
            <person name="Plumb R.W."/>
            <person name="Porter K.M."/>
            <person name="Ramsey Y."/>
            <person name="Ranby S.A."/>
            <person name="Rice C.M."/>
            <person name="Ross M.T."/>
            <person name="Searle S.M."/>
            <person name="Sehra H.K."/>
            <person name="Sheridan E."/>
            <person name="Skuce C.D."/>
            <person name="Smith S."/>
            <person name="Smith M."/>
            <person name="Spraggon L."/>
            <person name="Squares S.L."/>
            <person name="Steward C.A."/>
            <person name="Sycamore N."/>
            <person name="Tamlyn-Hall G."/>
            <person name="Tester J."/>
            <person name="Theaker A.J."/>
            <person name="Thomas D.W."/>
            <person name="Thorpe A."/>
            <person name="Tracey A."/>
            <person name="Tromans A."/>
            <person name="Tubby B."/>
            <person name="Wall M."/>
            <person name="Wallis J.M."/>
            <person name="West A.P."/>
            <person name="White S.S."/>
            <person name="Whitehead S.L."/>
            <person name="Whittaker H."/>
            <person name="Wild A."/>
            <person name="Willey D.J."/>
            <person name="Wilmer T.E."/>
            <person name="Wood J.M."/>
            <person name="Wray P.W."/>
            <person name="Wyatt J.C."/>
            <person name="Young L."/>
            <person name="Younger R.M."/>
            <person name="Bentley D.R."/>
            <person name="Coulson A."/>
            <person name="Durbin R.M."/>
            <person name="Hubbard T."/>
            <person name="Sulston J.E."/>
            <person name="Dunham I."/>
            <person name="Rogers J."/>
            <person name="Beck S."/>
        </authorList>
    </citation>
    <scope>NUCLEOTIDE SEQUENCE [LARGE SCALE GENOMIC DNA]</scope>
</reference>
<reference key="6">
    <citation type="journal article" date="2004" name="Genome Res.">
        <title>The status, quality, and expansion of the NIH full-length cDNA project: the Mammalian Gene Collection (MGC).</title>
        <authorList>
            <consortium name="The MGC Project Team"/>
        </authorList>
    </citation>
    <scope>NUCLEOTIDE SEQUENCE [LARGE SCALE MRNA] (ISOFORM PDE10A1)</scope>
    <source>
        <tissue>Colon</tissue>
    </source>
</reference>
<reference key="7">
    <citation type="journal article" date="2000" name="Eur. J. Biochem.">
        <title>The human phosphodiesterase PDE10A gene genomic organization and evolutionary relatedness with other PDEs containing GAF domains.</title>
        <authorList>
            <person name="Fujishige K."/>
            <person name="Kotera J."/>
            <person name="Yuasa K."/>
            <person name="Omori K."/>
        </authorList>
    </citation>
    <scope>NUCLEOTIDE SEQUENCE [GENOMIC DNA] OF 342-1055</scope>
    <scope>ALTERNATIVE SPLICING</scope>
</reference>
<reference key="8">
    <citation type="journal article" date="2006" name="J. Biol. Chem.">
        <title>cAMP is a ligand for the tandem GAF domain of human phosphodiesterase 10 and cGMP for the tandem GAF domain of phosphodiesterase 11.</title>
        <authorList>
            <person name="Gross-Langenhoff M."/>
            <person name="Hofbauer K."/>
            <person name="Weber J."/>
            <person name="Schultz A."/>
            <person name="Schultz J.E."/>
        </authorList>
    </citation>
    <scope>FUNCTION</scope>
    <scope>CATALYTIC ACTIVITY</scope>
    <scope>PATHWAY</scope>
    <scope>DOMAIN</scope>
    <scope>ACTIVITY REGULATION</scope>
</reference>
<reference key="9">
    <citation type="journal article" date="2008" name="Mol. Cell">
        <title>Kinase-selective enrichment enables quantitative phosphoproteomics of the kinome across the cell cycle.</title>
        <authorList>
            <person name="Daub H."/>
            <person name="Olsen J.V."/>
            <person name="Bairlein M."/>
            <person name="Gnad F."/>
            <person name="Oppermann F.S."/>
            <person name="Korner R."/>
            <person name="Greff Z."/>
            <person name="Keri G."/>
            <person name="Stemmann O."/>
            <person name="Mann M."/>
        </authorList>
    </citation>
    <scope>IDENTIFICATION BY MASS SPECTROMETRY [LARGE SCALE ANALYSIS]</scope>
    <source>
        <tissue>Cervix carcinoma</tissue>
    </source>
</reference>
<reference key="10">
    <citation type="journal article" date="2009" name="Mol. Cell. Proteomics">
        <title>Large-scale proteomics analysis of the human kinome.</title>
        <authorList>
            <person name="Oppermann F.S."/>
            <person name="Gnad F."/>
            <person name="Olsen J.V."/>
            <person name="Hornberger R."/>
            <person name="Greff Z."/>
            <person name="Keri G."/>
            <person name="Mann M."/>
            <person name="Daub H."/>
        </authorList>
    </citation>
    <scope>IDENTIFICATION BY MASS SPECTROMETRY [LARGE SCALE ANALYSIS]</scope>
</reference>
<reference key="11">
    <citation type="journal article" date="2016" name="Am. J. Hum. Genet.">
        <title>Biallelic mutations in PDE10A Lead to loss of striatal PDE10A and a hyperkinetic movement disorder with onset in infancy.</title>
        <authorList>
            <person name="Diggle C.P."/>
            <person name="Sukoff Rizzo S.J."/>
            <person name="Popiolek M."/>
            <person name="Hinttala R."/>
            <person name="Schuelke J.P."/>
            <person name="Kurian M.A."/>
            <person name="Carr I.M."/>
            <person name="Markham A.F."/>
            <person name="Bonthron D.T."/>
            <person name="Watson C."/>
            <person name="Sharif S.M."/>
            <person name="Reinhart V."/>
            <person name="James L.C."/>
            <person name="Vanase-Frawley M.A."/>
            <person name="Charych E."/>
            <person name="Allen M."/>
            <person name="Harms J."/>
            <person name="Schmidt C.J."/>
            <person name="Ng J."/>
            <person name="Pysden K."/>
            <person name="Strick C."/>
            <person name="Vieira P."/>
            <person name="Mankinen K."/>
            <person name="Kokkonen H."/>
            <person name="Kallioinen M."/>
            <person name="Sormunen R."/>
            <person name="Rinne J.O."/>
            <person name="Johansson J."/>
            <person name="Alakurtti K."/>
            <person name="Huilaja L."/>
            <person name="Hurskainen T."/>
            <person name="Tasanen K."/>
            <person name="Anttila E."/>
            <person name="Marques T.R."/>
            <person name="Howes O."/>
            <person name="Politis M."/>
            <person name="Fahiminiya S."/>
            <person name="Nguyen K.Q."/>
            <person name="Majewski J."/>
            <person name="Uusimaa J."/>
            <person name="Sheridan E."/>
            <person name="Brandon N.J."/>
        </authorList>
    </citation>
    <scope>INVOLVEMENT IN IOLOD</scope>
    <scope>VARIANTS IOLOD CYS-373 AND PRO-382</scope>
    <scope>CHARACTERIZATION OF VARIANTS IOLOD CYS-373 AND PRO-382</scope>
</reference>
<reference key="12">
    <citation type="journal article" date="2016" name="Am. J. Hum. Genet.">
        <title>De novo mutations in PDE10A cause childhood-onset chorea with bilateral striatal lesions.</title>
        <authorList>
            <person name="Mencacci N.E."/>
            <person name="Kamsteeg E.J."/>
            <person name="Nakashima K."/>
            <person name="R'Bibo L."/>
            <person name="Lynch D.S."/>
            <person name="Balint B."/>
            <person name="Willemsen M.A."/>
            <person name="Adams M.E."/>
            <person name="Wiethoff S."/>
            <person name="Suzuki K."/>
            <person name="Davies C.H."/>
            <person name="Ng J."/>
            <person name="Meyer E."/>
            <person name="Veneziano L."/>
            <person name="Giunti P."/>
            <person name="Hughes D."/>
            <person name="Raymond F.L."/>
            <person name="Carecchio M."/>
            <person name="Zorzi G."/>
            <person name="Nardocci N."/>
            <person name="Barzaghi C."/>
            <person name="Garavaglia B."/>
            <person name="Salpietro V."/>
            <person name="Hardy J."/>
            <person name="Pittman A.M."/>
            <person name="Houlden H."/>
            <person name="Kurian M.A."/>
            <person name="Kimura H."/>
            <person name="Vissers L.E."/>
            <person name="Wood N.W."/>
            <person name="Bhatia K.P."/>
        </authorList>
    </citation>
    <scope>TISSUE SPECIFICITY</scope>
    <scope>FUNCTION</scope>
    <scope>CATALYTIC ACTIVITY</scope>
    <scope>PATHWAY</scope>
    <scope>INVOLVEMENT IN ADSD2</scope>
    <scope>VARIANTS ADSD2 LEU-566 AND LEU-600</scope>
    <scope>CHARACTERIZATION OF VARIANTS ADSD2 LEU-566 AND LEU-600</scope>
</reference>
<reference key="13">
    <citation type="journal article" date="2007" name="Proc. Natl. Acad. Sci. U.S.A.">
        <title>Structural insight into substrate specificity of phosphodiesterase 10.</title>
        <authorList>
            <person name="Wang H."/>
            <person name="Liu Y."/>
            <person name="Hou J."/>
            <person name="Zheng M."/>
            <person name="Robinson H."/>
            <person name="Ke H."/>
        </authorList>
    </citation>
    <scope>X-RAY CRYSTALLOGRAPHY (1.45 ANGSTROMS) OF 712-1042 IN COMPLEXES WITH AMP; CAMP; GMP; CGMP AND MAGNESIUM</scope>
    <scope>MUTAGENESIS OF ASP-830</scope>
    <scope>FUNCTION</scope>
    <scope>CATALYTIC ACTIVITY</scope>
    <scope>PATHWAY</scope>
    <scope>COFACTOR</scope>
    <scope>BIOPHYSICOCHEMICAL PROPERTIES</scope>
</reference>
<reference evidence="13" key="14">
    <citation type="journal article" date="2008" name="J. Biol. Chem.">
        <title>Crystal structure of the GAF-B domain from human phosphodiesterase 10A complexed with its ligand, cAMP.</title>
        <authorList>
            <person name="Handa N."/>
            <person name="Mizohata E."/>
            <person name="Kishishita S."/>
            <person name="Toyama M."/>
            <person name="Morita S."/>
            <person name="Uchikubo-Kamo T."/>
            <person name="Akasaka R."/>
            <person name="Omori K."/>
            <person name="Kotera J."/>
            <person name="Terada T."/>
            <person name="Shirouzu M."/>
            <person name="Yokoyama S."/>
        </authorList>
    </citation>
    <scope>X-RAY CRYSTALLOGRAPHY (2.1 ANGSTROMS) OF 518-703 IN COMPLEX WITH CAMP</scope>
    <scope>DOMAIN</scope>
    <scope>SUBUNIT</scope>
</reference>
<gene>
    <name type="primary">PDE10A</name>
</gene>
<protein>
    <recommendedName>
        <fullName>cAMP and cAMP-inhibited cGMP 3',5'-cyclic phosphodiesterase 10A</fullName>
        <ecNumber evidence="4 5 8 11">3.1.4.17</ecNumber>
    </recommendedName>
</protein>
<sequence>MASLEEPLAPRPQGPLPAAGDEPGCGPGKLRPEPRLSAAGGGSAAGPGPAPEWPGRGRAERAAPPRPPLSSAGRPSPAGGPGALSARGGGCGWVAARAPLALAFSSRVPSSSPSFFYFWPPPPPPPPSFLPSSSAFHLPVRLPGREGAAAAAAAGGGGDAGGGGGGGQEAAPLSVPTSSSHRGGGGSGGGRRRLFLSPALQGLLLPARAGPRPPPPPRLPLGQAARRAGSPGFPGAGPGGGGQTPRRPQGASFALAAAAALLFGSDMEDGPSNNASCFRRLTECFLSPSLTDEKVKAYLSLHPQVLDEFVSESVSAETVEKWLKRKNNKSEDESAPKEVSRYQDTNMQGVVYELNSYIEQRLDTGGDNQLLLYELSSIIKIATKADGFALYFLGECNNSLCIFTPPGIKEGKPRLIPAGPITQGTTVSAYVAKSRKTLLVEDILGDERFPRGTGLESGTRIQSVLCLPIVTAIGDLIGILELYRHWGKEAFCLSHQEVATANLAWASVAIHQVQVCRGLAKQTELNDFLLDVSKTYFDNIVAIDSLLEHIMIYAKNLVNADRCALFQVDHKNKELYSDLFDIGEEKEGKPVFKKTKEIRFSIEKGIAGQVARTGEVLNIPDAYADPRFNREVDLYTGYTTRNILCMPIVSRGSVIGVVQMVNKISGSAFSKTDENNFKMFAVFCALALHCANMYHRIRHSECIYRVTMEKLSYHSICTSEEWQGLMQFTLPVRLCKEIELFHFDIGPFENMWPGIFVYMVHRSCGTSCFELEKLCRFIMSVKKNYRRVPYHNWKHAVTVAHCMYAILQNNHTLFTDLERKGLLIACLCHDLDHRGFSNSYLQKFDHPLAALYSTSTMEQHHFSQTVSILQLEGHNIFSTLSSSEYEQVLEIIRKAIIATDLALYFGNRKQLEEMYQTGSLNLNNQSHRDRVIGLMMTACDLCSVTKLWPVTKLTANDIYAEFWAEGDEMKKLGIQPIPMMDRDKKDEVPQGQLGFYNAVAIPCYTTLTQILPPTEPLLKACRDNLSQWEKVIRGEETATWISSPSVAQKAAASED</sequence>
<dbReference type="EC" id="3.1.4.17" evidence="4 5 8 11"/>
<dbReference type="EMBL" id="AB026816">
    <property type="protein sequence ID" value="BAA84467.1"/>
    <property type="molecule type" value="mRNA"/>
</dbReference>
<dbReference type="EMBL" id="AB020593">
    <property type="protein sequence ID" value="BAA78034.1"/>
    <property type="molecule type" value="mRNA"/>
</dbReference>
<dbReference type="EMBL" id="AF127479">
    <property type="protein sequence ID" value="AAD32595.1"/>
    <property type="molecule type" value="mRNA"/>
</dbReference>
<dbReference type="EMBL" id="AF127480">
    <property type="protein sequence ID" value="AAD32596.1"/>
    <property type="molecule type" value="mRNA"/>
</dbReference>
<dbReference type="EMBL" id="CR536567">
    <property type="protein sequence ID" value="CAG38804.1"/>
    <property type="molecule type" value="mRNA"/>
</dbReference>
<dbReference type="EMBL" id="AL117345">
    <property type="status" value="NOT_ANNOTATED_CDS"/>
    <property type="molecule type" value="Genomic_DNA"/>
</dbReference>
<dbReference type="EMBL" id="AL136130">
    <property type="status" value="NOT_ANNOTATED_CDS"/>
    <property type="molecule type" value="Genomic_DNA"/>
</dbReference>
<dbReference type="EMBL" id="AL160160">
    <property type="status" value="NOT_ANNOTATED_CDS"/>
    <property type="molecule type" value="Genomic_DNA"/>
</dbReference>
<dbReference type="EMBL" id="AL121789">
    <property type="status" value="NOT_ANNOTATED_CDS"/>
    <property type="molecule type" value="Genomic_DNA"/>
</dbReference>
<dbReference type="EMBL" id="AL590302">
    <property type="status" value="NOT_ANNOTATED_CDS"/>
    <property type="molecule type" value="Genomic_DNA"/>
</dbReference>
<dbReference type="EMBL" id="AL591962">
    <property type="status" value="NOT_ANNOTATED_CDS"/>
    <property type="molecule type" value="Genomic_DNA"/>
</dbReference>
<dbReference type="EMBL" id="KF458352">
    <property type="status" value="NOT_ANNOTATED_CDS"/>
    <property type="molecule type" value="Genomic_DNA"/>
</dbReference>
<dbReference type="EMBL" id="KF458359">
    <property type="status" value="NOT_ANNOTATED_CDS"/>
    <property type="molecule type" value="Genomic_DNA"/>
</dbReference>
<dbReference type="EMBL" id="BC104858">
    <property type="protein sequence ID" value="AAI04859.1"/>
    <property type="molecule type" value="mRNA"/>
</dbReference>
<dbReference type="EMBL" id="BC104860">
    <property type="protein sequence ID" value="AAI04861.1"/>
    <property type="molecule type" value="mRNA"/>
</dbReference>
<dbReference type="EMBL" id="AB041798">
    <property type="protein sequence ID" value="BAB16383.1"/>
    <property type="molecule type" value="Genomic_DNA"/>
</dbReference>
<dbReference type="CCDS" id="CCDS94029.1">
    <molecule id="Q9Y233-3"/>
</dbReference>
<dbReference type="RefSeq" id="NP_001124162.1">
    <molecule id="Q9Y233-2"/>
    <property type="nucleotide sequence ID" value="NM_001130690.3"/>
</dbReference>
<dbReference type="RefSeq" id="NP_001372008.1">
    <molecule id="Q9Y233-3"/>
    <property type="nucleotide sequence ID" value="NM_001385079.1"/>
</dbReference>
<dbReference type="RefSeq" id="NP_006652.1">
    <molecule id="Q9Y233-1"/>
    <property type="nucleotide sequence ID" value="NM_006661.4"/>
</dbReference>
<dbReference type="RefSeq" id="XP_011533690.1">
    <molecule id="Q9Y233-1"/>
    <property type="nucleotide sequence ID" value="XM_011535388.4"/>
</dbReference>
<dbReference type="RefSeq" id="XP_047274054.1">
    <molecule id="Q9Y233-1"/>
    <property type="nucleotide sequence ID" value="XM_047418098.1"/>
</dbReference>
<dbReference type="RefSeq" id="XP_047274055.1">
    <molecule id="Q9Y233-1"/>
    <property type="nucleotide sequence ID" value="XM_047418099.1"/>
</dbReference>
<dbReference type="RefSeq" id="XP_054210045.1">
    <molecule id="Q9Y233-1"/>
    <property type="nucleotide sequence ID" value="XM_054354070.1"/>
</dbReference>
<dbReference type="PDB" id="2OUN">
    <property type="method" value="X-ray"/>
    <property type="resolution" value="1.56 A"/>
    <property type="chains" value="A/B=439-766"/>
</dbReference>
<dbReference type="PDB" id="2OUP">
    <property type="method" value="X-ray"/>
    <property type="resolution" value="1.56 A"/>
    <property type="chains" value="A/B=439-766"/>
</dbReference>
<dbReference type="PDB" id="2OUQ">
    <property type="method" value="X-ray"/>
    <property type="resolution" value="1.90 A"/>
    <property type="chains" value="A/B=439-766"/>
</dbReference>
<dbReference type="PDB" id="2OUR">
    <property type="method" value="X-ray"/>
    <property type="resolution" value="1.45 A"/>
    <property type="chains" value="A/B=439-766"/>
</dbReference>
<dbReference type="PDB" id="2OUS">
    <property type="method" value="X-ray"/>
    <property type="resolution" value="1.45 A"/>
    <property type="chains" value="A/B=439-766"/>
</dbReference>
<dbReference type="PDB" id="2OUU">
    <property type="method" value="X-ray"/>
    <property type="resolution" value="1.52 A"/>
    <property type="chains" value="A/B=439-766"/>
</dbReference>
<dbReference type="PDB" id="2OUV">
    <property type="method" value="X-ray"/>
    <property type="resolution" value="1.56 A"/>
    <property type="chains" value="A/B=439-766"/>
</dbReference>
<dbReference type="PDB" id="2OUY">
    <property type="method" value="X-ray"/>
    <property type="resolution" value="1.90 A"/>
    <property type="chains" value="A/B=439-766"/>
</dbReference>
<dbReference type="PDB" id="2WEY">
    <property type="method" value="X-ray"/>
    <property type="resolution" value="2.80 A"/>
    <property type="chains" value="A/B=439-779"/>
</dbReference>
<dbReference type="PDB" id="2Y0J">
    <property type="method" value="X-ray"/>
    <property type="resolution" value="2.43 A"/>
    <property type="chains" value="A/B=432-764"/>
</dbReference>
<dbReference type="PDB" id="2ZMF">
    <property type="method" value="X-ray"/>
    <property type="resolution" value="2.10 A"/>
    <property type="chains" value="A/B=246-427"/>
</dbReference>
<dbReference type="PDB" id="3SN7">
    <property type="method" value="X-ray"/>
    <property type="resolution" value="1.82 A"/>
    <property type="chains" value="A/B=439-779"/>
</dbReference>
<dbReference type="PDB" id="3SNI">
    <property type="method" value="X-ray"/>
    <property type="resolution" value="1.90 A"/>
    <property type="chains" value="A/B=439-779"/>
</dbReference>
<dbReference type="PDB" id="3SNL">
    <property type="method" value="X-ray"/>
    <property type="resolution" value="2.40 A"/>
    <property type="chains" value="A/B=439-779"/>
</dbReference>
<dbReference type="PDB" id="3UI7">
    <property type="method" value="X-ray"/>
    <property type="resolution" value="2.28 A"/>
    <property type="chains" value="A/B=432-760"/>
</dbReference>
<dbReference type="PDB" id="3UUO">
    <property type="method" value="X-ray"/>
    <property type="resolution" value="2.11 A"/>
    <property type="chains" value="A/B=432-760"/>
</dbReference>
<dbReference type="PDB" id="3WI2">
    <property type="method" value="X-ray"/>
    <property type="resolution" value="2.26 A"/>
    <property type="chains" value="A/B=439-779"/>
</dbReference>
<dbReference type="PDB" id="3WS8">
    <property type="method" value="X-ray"/>
    <property type="resolution" value="2.60 A"/>
    <property type="chains" value="A/B=439-779"/>
</dbReference>
<dbReference type="PDB" id="3WS9">
    <property type="method" value="X-ray"/>
    <property type="resolution" value="2.99 A"/>
    <property type="chains" value="A/B=439-779"/>
</dbReference>
<dbReference type="PDB" id="3WYK">
    <property type="method" value="X-ray"/>
    <property type="resolution" value="2.50 A"/>
    <property type="chains" value="A/B=442-779"/>
</dbReference>
<dbReference type="PDB" id="3WYL">
    <property type="method" value="X-ray"/>
    <property type="resolution" value="2.68 A"/>
    <property type="chains" value="A/B=442-779"/>
</dbReference>
<dbReference type="PDB" id="3WYM">
    <property type="method" value="X-ray"/>
    <property type="resolution" value="2.00 A"/>
    <property type="chains" value="A/B=442-779"/>
</dbReference>
<dbReference type="PDB" id="4AEL">
    <property type="method" value="X-ray"/>
    <property type="resolution" value="2.20 A"/>
    <property type="chains" value="A/B=439-779"/>
</dbReference>
<dbReference type="PDB" id="4AJD">
    <property type="method" value="X-ray"/>
    <property type="resolution" value="2.30 A"/>
    <property type="chains" value="A/D=439-764"/>
</dbReference>
<dbReference type="PDB" id="4AJF">
    <property type="method" value="X-ray"/>
    <property type="resolution" value="1.90 A"/>
    <property type="chains" value="A/D=439-764"/>
</dbReference>
<dbReference type="PDB" id="4AJG">
    <property type="method" value="X-ray"/>
    <property type="resolution" value="2.30 A"/>
    <property type="chains" value="A/D=439-764"/>
</dbReference>
<dbReference type="PDB" id="4AJM">
    <property type="method" value="X-ray"/>
    <property type="resolution" value="2.40 A"/>
    <property type="chains" value="A/D=439-764"/>
</dbReference>
<dbReference type="PDB" id="4BBX">
    <property type="method" value="X-ray"/>
    <property type="resolution" value="2.50 A"/>
    <property type="chains" value="A/B=443-769"/>
</dbReference>
<dbReference type="PDB" id="4DDL">
    <property type="method" value="X-ray"/>
    <property type="resolution" value="2.07 A"/>
    <property type="chains" value="A/B=442-779"/>
</dbReference>
<dbReference type="PDB" id="4DFF">
    <property type="method" value="X-ray"/>
    <property type="resolution" value="2.11 A"/>
    <property type="chains" value="A/B=432-779"/>
</dbReference>
<dbReference type="PDB" id="4FCB">
    <property type="method" value="X-ray"/>
    <property type="resolution" value="2.10 A"/>
    <property type="chains" value="A/B=439-779"/>
</dbReference>
<dbReference type="PDB" id="4FCD">
    <property type="method" value="X-ray"/>
    <property type="resolution" value="2.02 A"/>
    <property type="chains" value="A/B=439-779"/>
</dbReference>
<dbReference type="PDB" id="4HEU">
    <property type="method" value="X-ray"/>
    <property type="resolution" value="2.00 A"/>
    <property type="chains" value="A/B=442-759"/>
</dbReference>
<dbReference type="PDB" id="4HF4">
    <property type="method" value="X-ray"/>
    <property type="resolution" value="2.00 A"/>
    <property type="chains" value="A/B=442-759"/>
</dbReference>
<dbReference type="PDB" id="4LKQ">
    <property type="method" value="X-ray"/>
    <property type="resolution" value="1.62 A"/>
    <property type="chains" value="A/B=439-779"/>
</dbReference>
<dbReference type="PDB" id="4LLJ">
    <property type="method" value="X-ray"/>
    <property type="resolution" value="1.56 A"/>
    <property type="chains" value="A/B=439-779"/>
</dbReference>
<dbReference type="PDB" id="4LLK">
    <property type="method" value="X-ray"/>
    <property type="resolution" value="1.55 A"/>
    <property type="chains" value="A/B=439-779"/>
</dbReference>
<dbReference type="PDB" id="4LLP">
    <property type="method" value="X-ray"/>
    <property type="resolution" value="1.75 A"/>
    <property type="chains" value="A/B=439-779"/>
</dbReference>
<dbReference type="PDB" id="4LLX">
    <property type="method" value="X-ray"/>
    <property type="resolution" value="1.75 A"/>
    <property type="chains" value="A/B=439-779"/>
</dbReference>
<dbReference type="PDB" id="4LM0">
    <property type="method" value="X-ray"/>
    <property type="resolution" value="1.66 A"/>
    <property type="chains" value="A/B=439-779"/>
</dbReference>
<dbReference type="PDB" id="4LM1">
    <property type="method" value="X-ray"/>
    <property type="resolution" value="1.60 A"/>
    <property type="chains" value="A/B=439-779"/>
</dbReference>
<dbReference type="PDB" id="4LM2">
    <property type="method" value="X-ray"/>
    <property type="resolution" value="1.55 A"/>
    <property type="chains" value="A/B=439-779"/>
</dbReference>
<dbReference type="PDB" id="4LM3">
    <property type="method" value="X-ray"/>
    <property type="resolution" value="1.49 A"/>
    <property type="chains" value="A/B=439-779"/>
</dbReference>
<dbReference type="PDB" id="4LM4">
    <property type="method" value="X-ray"/>
    <property type="resolution" value="1.48 A"/>
    <property type="chains" value="A/B=439-779"/>
</dbReference>
<dbReference type="PDB" id="4MRW">
    <property type="method" value="X-ray"/>
    <property type="resolution" value="1.96 A"/>
    <property type="chains" value="A/B=439-779"/>
</dbReference>
<dbReference type="PDB" id="4MRZ">
    <property type="method" value="X-ray"/>
    <property type="resolution" value="1.58 A"/>
    <property type="chains" value="A/B=439-779"/>
</dbReference>
<dbReference type="PDB" id="4MS0">
    <property type="method" value="X-ray"/>
    <property type="resolution" value="1.79 A"/>
    <property type="chains" value="A/B=439-779"/>
</dbReference>
<dbReference type="PDB" id="4MSA">
    <property type="method" value="X-ray"/>
    <property type="resolution" value="1.62 A"/>
    <property type="chains" value="A/B=439-779"/>
</dbReference>
<dbReference type="PDB" id="4MSC">
    <property type="method" value="X-ray"/>
    <property type="resolution" value="2.47 A"/>
    <property type="chains" value="A/B=439-779"/>
</dbReference>
<dbReference type="PDB" id="4MSE">
    <property type="method" value="X-ray"/>
    <property type="resolution" value="2.81 A"/>
    <property type="chains" value="A/B=439-779"/>
</dbReference>
<dbReference type="PDB" id="4MSH">
    <property type="method" value="X-ray"/>
    <property type="resolution" value="2.30 A"/>
    <property type="chains" value="A/B=439-779"/>
</dbReference>
<dbReference type="PDB" id="4MSN">
    <property type="method" value="X-ray"/>
    <property type="resolution" value="2.30 A"/>
    <property type="chains" value="A/B=439-779"/>
</dbReference>
<dbReference type="PDB" id="4MUW">
    <property type="method" value="X-ray"/>
    <property type="resolution" value="2.64 A"/>
    <property type="chains" value="A/B=442-779"/>
</dbReference>
<dbReference type="PDB" id="4MVH">
    <property type="method" value="X-ray"/>
    <property type="resolution" value="2.50 A"/>
    <property type="chains" value="A/B=442-779"/>
</dbReference>
<dbReference type="PDB" id="4P0N">
    <property type="method" value="X-ray"/>
    <property type="resolution" value="2.08 A"/>
    <property type="chains" value="A/B=442-779"/>
</dbReference>
<dbReference type="PDB" id="4P1R">
    <property type="method" value="X-ray"/>
    <property type="resolution" value="2.24 A"/>
    <property type="chains" value="A/B=442-779"/>
</dbReference>
<dbReference type="PDB" id="4PHW">
    <property type="method" value="X-ray"/>
    <property type="resolution" value="2.50 A"/>
    <property type="chains" value="A/B=442-779"/>
</dbReference>
<dbReference type="PDB" id="4TPM">
    <property type="method" value="X-ray"/>
    <property type="resolution" value="2.77 A"/>
    <property type="chains" value="A/B=442-779"/>
</dbReference>
<dbReference type="PDB" id="4TPP">
    <property type="method" value="X-ray"/>
    <property type="resolution" value="2.65 A"/>
    <property type="chains" value="A/B=442-779"/>
</dbReference>
<dbReference type="PDB" id="4WN1">
    <property type="method" value="X-ray"/>
    <property type="resolution" value="3.13 A"/>
    <property type="chains" value="A/B=439-779"/>
</dbReference>
<dbReference type="PDB" id="4XY2">
    <property type="method" value="X-ray"/>
    <property type="resolution" value="2.03 A"/>
    <property type="chains" value="A/B=439-779"/>
</dbReference>
<dbReference type="PDB" id="4YQH">
    <property type="method" value="X-ray"/>
    <property type="resolution" value="2.31 A"/>
    <property type="chains" value="A/B=439-759"/>
</dbReference>
<dbReference type="PDB" id="4YS7">
    <property type="method" value="X-ray"/>
    <property type="resolution" value="2.50 A"/>
    <property type="chains" value="A/B=439-759"/>
</dbReference>
<dbReference type="PDB" id="4ZO5">
    <property type="method" value="X-ray"/>
    <property type="resolution" value="2.50 A"/>
    <property type="chains" value="A/B=439-759"/>
</dbReference>
<dbReference type="PDB" id="5AXP">
    <property type="method" value="X-ray"/>
    <property type="resolution" value="1.95 A"/>
    <property type="chains" value="A/B=442-779"/>
</dbReference>
<dbReference type="PDB" id="5AXQ">
    <property type="method" value="X-ray"/>
    <property type="resolution" value="1.77 A"/>
    <property type="chains" value="A/B=442-779"/>
</dbReference>
<dbReference type="PDB" id="5B4K">
    <property type="method" value="X-ray"/>
    <property type="resolution" value="2.90 A"/>
    <property type="chains" value="A/B=442-779"/>
</dbReference>
<dbReference type="PDB" id="5B4L">
    <property type="method" value="X-ray"/>
    <property type="resolution" value="2.40 A"/>
    <property type="chains" value="A/B=442-779"/>
</dbReference>
<dbReference type="PDB" id="5C1W">
    <property type="method" value="X-ray"/>
    <property type="resolution" value="1.70 A"/>
    <property type="chains" value="A/B=439-779"/>
</dbReference>
<dbReference type="PDB" id="5C28">
    <property type="method" value="X-ray"/>
    <property type="resolution" value="1.56 A"/>
    <property type="chains" value="A/B=439-779"/>
</dbReference>
<dbReference type="PDB" id="5C29">
    <property type="method" value="X-ray"/>
    <property type="resolution" value="2.05 A"/>
    <property type="chains" value="A/B=439-779"/>
</dbReference>
<dbReference type="PDB" id="5C2A">
    <property type="method" value="X-ray"/>
    <property type="resolution" value="2.00 A"/>
    <property type="chains" value="A/B=439-779"/>
</dbReference>
<dbReference type="PDB" id="5C2E">
    <property type="method" value="X-ray"/>
    <property type="resolution" value="2.10 A"/>
    <property type="chains" value="A/B=439-779"/>
</dbReference>
<dbReference type="PDB" id="5C2H">
    <property type="method" value="X-ray"/>
    <property type="resolution" value="2.09 A"/>
    <property type="chains" value="A/B=439-779"/>
</dbReference>
<dbReference type="PDB" id="5DH4">
    <property type="method" value="X-ray"/>
    <property type="resolution" value="2.20 A"/>
    <property type="chains" value="A/B=439-779"/>
</dbReference>
<dbReference type="PDB" id="5DH5">
    <property type="method" value="X-ray"/>
    <property type="resolution" value="2.00 A"/>
    <property type="chains" value="A/B=439-779"/>
</dbReference>
<dbReference type="PDB" id="5EDE">
    <property type="method" value="X-ray"/>
    <property type="resolution" value="2.20 A"/>
    <property type="chains" value="A/C/D=447-760, B=448-760"/>
</dbReference>
<dbReference type="PDB" id="5EDG">
    <property type="method" value="X-ray"/>
    <property type="resolution" value="2.30 A"/>
    <property type="chains" value="A/B/C/D=447-760"/>
</dbReference>
<dbReference type="PDB" id="5EDH">
    <property type="method" value="X-ray"/>
    <property type="resolution" value="2.03 A"/>
    <property type="chains" value="A/B/C/D=448-760"/>
</dbReference>
<dbReference type="PDB" id="5EDI">
    <property type="method" value="X-ray"/>
    <property type="resolution" value="2.20 A"/>
    <property type="chains" value="A/B/C/D=442-760"/>
</dbReference>
<dbReference type="PDB" id="5I2R">
    <property type="method" value="X-ray"/>
    <property type="resolution" value="2.50 A"/>
    <property type="chains" value="A/B/C/D=447-763"/>
</dbReference>
<dbReference type="PDB" id="5K9R">
    <property type="method" value="X-ray"/>
    <property type="resolution" value="2.70 A"/>
    <property type="chains" value="A/B=448-759"/>
</dbReference>
<dbReference type="PDB" id="5SDU">
    <property type="method" value="X-ray"/>
    <property type="resolution" value="2.15 A"/>
    <property type="chains" value="A/B/C/D=439-779"/>
</dbReference>
<dbReference type="PDB" id="5SDV">
    <property type="method" value="X-ray"/>
    <property type="resolution" value="2.15 A"/>
    <property type="chains" value="A/B/C/D=439-779"/>
</dbReference>
<dbReference type="PDB" id="5SDW">
    <property type="method" value="X-ray"/>
    <property type="resolution" value="2.35 A"/>
    <property type="chains" value="A/B/C/D=439-779"/>
</dbReference>
<dbReference type="PDB" id="5SDX">
    <property type="method" value="X-ray"/>
    <property type="resolution" value="2.19 A"/>
    <property type="chains" value="A/B/C/D=439-779"/>
</dbReference>
<dbReference type="PDB" id="5SDY">
    <property type="method" value="X-ray"/>
    <property type="resolution" value="2.20 A"/>
    <property type="chains" value="A=439-779"/>
</dbReference>
<dbReference type="PDB" id="5SDZ">
    <property type="method" value="X-ray"/>
    <property type="resolution" value="2.35 A"/>
    <property type="chains" value="A/B/C/D=439-779"/>
</dbReference>
<dbReference type="PDB" id="5SE0">
    <property type="method" value="X-ray"/>
    <property type="resolution" value="2.01 A"/>
    <property type="chains" value="A/B/C/D=439-779"/>
</dbReference>
<dbReference type="PDB" id="5SE1">
    <property type="method" value="X-ray"/>
    <property type="resolution" value="2.30 A"/>
    <property type="chains" value="A=439-779"/>
</dbReference>
<dbReference type="PDB" id="5SE2">
    <property type="method" value="X-ray"/>
    <property type="resolution" value="2.20 A"/>
    <property type="chains" value="A/B/C/D=439-779"/>
</dbReference>
<dbReference type="PDB" id="5SE3">
    <property type="method" value="X-ray"/>
    <property type="resolution" value="2.14 A"/>
    <property type="chains" value="A/B/C/D=439-779"/>
</dbReference>
<dbReference type="PDB" id="5SE4">
    <property type="method" value="X-ray"/>
    <property type="resolution" value="2.50 A"/>
    <property type="chains" value="A/B/C/D=439-779"/>
</dbReference>
<dbReference type="PDB" id="5SE5">
    <property type="method" value="X-ray"/>
    <property type="resolution" value="2.08 A"/>
    <property type="chains" value="A/B/C/D=439-779"/>
</dbReference>
<dbReference type="PDB" id="5SE6">
    <property type="method" value="X-ray"/>
    <property type="resolution" value="1.95 A"/>
    <property type="chains" value="A/B/C/D=439-779"/>
</dbReference>
<dbReference type="PDB" id="5SE7">
    <property type="method" value="X-ray"/>
    <property type="resolution" value="2.17 A"/>
    <property type="chains" value="A/B/C/D=439-779"/>
</dbReference>
<dbReference type="PDB" id="5SE8">
    <property type="method" value="X-ray"/>
    <property type="resolution" value="1.99 A"/>
    <property type="chains" value="A/B/C/D=439-779"/>
</dbReference>
<dbReference type="PDB" id="5SE9">
    <property type="method" value="X-ray"/>
    <property type="resolution" value="1.94 A"/>
    <property type="chains" value="A/B/C/D=439-779"/>
</dbReference>
<dbReference type="PDB" id="5SEA">
    <property type="method" value="X-ray"/>
    <property type="resolution" value="2.00 A"/>
    <property type="chains" value="A/B/C/D=439-779"/>
</dbReference>
<dbReference type="PDB" id="5SEB">
    <property type="method" value="X-ray"/>
    <property type="resolution" value="2.28 A"/>
    <property type="chains" value="A/B/C/D=439-779"/>
</dbReference>
<dbReference type="PDB" id="5SEC">
    <property type="method" value="X-ray"/>
    <property type="resolution" value="2.03 A"/>
    <property type="chains" value="A/B/C/D=439-779"/>
</dbReference>
<dbReference type="PDB" id="5SED">
    <property type="method" value="X-ray"/>
    <property type="resolution" value="2.32 A"/>
    <property type="chains" value="A/B/C/D=439-779"/>
</dbReference>
<dbReference type="PDB" id="5SEE">
    <property type="method" value="X-ray"/>
    <property type="resolution" value="2.35 A"/>
    <property type="chains" value="A=439-779"/>
</dbReference>
<dbReference type="PDB" id="5SEF">
    <property type="method" value="X-ray"/>
    <property type="resolution" value="2.29 A"/>
    <property type="chains" value="A/B/C/D=439-779"/>
</dbReference>
<dbReference type="PDB" id="5SEG">
    <property type="method" value="X-ray"/>
    <property type="resolution" value="2.29 A"/>
    <property type="chains" value="A/B/C/D=439-779"/>
</dbReference>
<dbReference type="PDB" id="5SEH">
    <property type="method" value="X-ray"/>
    <property type="resolution" value="2.10 A"/>
    <property type="chains" value="A/B/C/D=439-779"/>
</dbReference>
<dbReference type="PDB" id="5SEI">
    <property type="method" value="X-ray"/>
    <property type="resolution" value="2.37 A"/>
    <property type="chains" value="A/B/C/D=439-779"/>
</dbReference>
<dbReference type="PDB" id="5SEJ">
    <property type="method" value="X-ray"/>
    <property type="resolution" value="2.44 A"/>
    <property type="chains" value="A/B/C/D=439-779"/>
</dbReference>
<dbReference type="PDB" id="5SEK">
    <property type="method" value="X-ray"/>
    <property type="resolution" value="2.15 A"/>
    <property type="chains" value="A/B/C/D=439-779"/>
</dbReference>
<dbReference type="PDB" id="5SEL">
    <property type="method" value="X-ray"/>
    <property type="resolution" value="2.20 A"/>
    <property type="chains" value="A/B/C/D=439-779"/>
</dbReference>
<dbReference type="PDB" id="5SEM">
    <property type="method" value="X-ray"/>
    <property type="resolution" value="2.10 A"/>
    <property type="chains" value="A/B/C/D=439-779"/>
</dbReference>
<dbReference type="PDB" id="5SEN">
    <property type="method" value="X-ray"/>
    <property type="resolution" value="2.04 A"/>
    <property type="chains" value="A/B/C/D=439-779"/>
</dbReference>
<dbReference type="PDB" id="5SEO">
    <property type="method" value="X-ray"/>
    <property type="resolution" value="2.10 A"/>
    <property type="chains" value="A/B/C/D=439-779"/>
</dbReference>
<dbReference type="PDB" id="5SEP">
    <property type="method" value="X-ray"/>
    <property type="resolution" value="2.10 A"/>
    <property type="chains" value="A/B/C/D=439-779"/>
</dbReference>
<dbReference type="PDB" id="5SEQ">
    <property type="method" value="X-ray"/>
    <property type="resolution" value="2.18 A"/>
    <property type="chains" value="A/B/C/D=439-779"/>
</dbReference>
<dbReference type="PDB" id="5SER">
    <property type="method" value="X-ray"/>
    <property type="resolution" value="2.25 A"/>
    <property type="chains" value="A/B/C/D=439-779"/>
</dbReference>
<dbReference type="PDB" id="5SES">
    <property type="method" value="X-ray"/>
    <property type="resolution" value="2.11 A"/>
    <property type="chains" value="A/B/C/D=439-779"/>
</dbReference>
<dbReference type="PDB" id="5SET">
    <property type="method" value="X-ray"/>
    <property type="resolution" value="2.40 A"/>
    <property type="chains" value="A=439-779"/>
</dbReference>
<dbReference type="PDB" id="5SEU">
    <property type="method" value="X-ray"/>
    <property type="resolution" value="2.09 A"/>
    <property type="chains" value="A/B/C/D=439-779"/>
</dbReference>
<dbReference type="PDB" id="5SEV">
    <property type="method" value="X-ray"/>
    <property type="resolution" value="2.31 A"/>
    <property type="chains" value="A/B/C/D=439-779"/>
</dbReference>
<dbReference type="PDB" id="5SEW">
    <property type="method" value="X-ray"/>
    <property type="resolution" value="2.30 A"/>
    <property type="chains" value="A=439-779"/>
</dbReference>
<dbReference type="PDB" id="5SEX">
    <property type="method" value="X-ray"/>
    <property type="resolution" value="1.99 A"/>
    <property type="chains" value="A/B/C/D=439-779"/>
</dbReference>
<dbReference type="PDB" id="5SEY">
    <property type="method" value="X-ray"/>
    <property type="resolution" value="2.29 A"/>
    <property type="chains" value="A/B/C/D=439-779"/>
</dbReference>
<dbReference type="PDB" id="5SEZ">
    <property type="method" value="X-ray"/>
    <property type="resolution" value="1.99 A"/>
    <property type="chains" value="A/B/C/D=439-779"/>
</dbReference>
<dbReference type="PDB" id="5SF0">
    <property type="method" value="X-ray"/>
    <property type="resolution" value="2.10 A"/>
    <property type="chains" value="A/B/C/D=439-779"/>
</dbReference>
<dbReference type="PDB" id="5SF1">
    <property type="method" value="X-ray"/>
    <property type="resolution" value="2.11 A"/>
    <property type="chains" value="A/B/C/D=439-779"/>
</dbReference>
<dbReference type="PDB" id="5SF2">
    <property type="method" value="X-ray"/>
    <property type="resolution" value="2.02 A"/>
    <property type="chains" value="A=439-779"/>
</dbReference>
<dbReference type="PDB" id="5SF3">
    <property type="method" value="X-ray"/>
    <property type="resolution" value="2.15 A"/>
    <property type="chains" value="A/B/C/D=439-779"/>
</dbReference>
<dbReference type="PDB" id="5SF4">
    <property type="method" value="X-ray"/>
    <property type="resolution" value="2.25 A"/>
    <property type="chains" value="A/B/C/D=439-779"/>
</dbReference>
<dbReference type="PDB" id="5SF5">
    <property type="method" value="X-ray"/>
    <property type="resolution" value="1.98 A"/>
    <property type="chains" value="A/B/C/D=439-779"/>
</dbReference>
<dbReference type="PDB" id="5SF6">
    <property type="method" value="X-ray"/>
    <property type="resolution" value="2.03 A"/>
    <property type="chains" value="A/B/C/D=439-779"/>
</dbReference>
<dbReference type="PDB" id="5SF7">
    <property type="method" value="X-ray"/>
    <property type="resolution" value="2.08 A"/>
    <property type="chains" value="A/B/C/D=439-779"/>
</dbReference>
<dbReference type="PDB" id="5SF8">
    <property type="method" value="X-ray"/>
    <property type="resolution" value="2.15 A"/>
    <property type="chains" value="A/B/C/D=439-779"/>
</dbReference>
<dbReference type="PDB" id="5SF9">
    <property type="method" value="X-ray"/>
    <property type="resolution" value="2.37 A"/>
    <property type="chains" value="A/B/C/D=439-779"/>
</dbReference>
<dbReference type="PDB" id="5SFA">
    <property type="method" value="X-ray"/>
    <property type="resolution" value="2.32 A"/>
    <property type="chains" value="A/B/C/D=439-779"/>
</dbReference>
<dbReference type="PDB" id="5SFB">
    <property type="method" value="X-ray"/>
    <property type="resolution" value="1.98 A"/>
    <property type="chains" value="A/B/C/D=439-779"/>
</dbReference>
<dbReference type="PDB" id="5SFC">
    <property type="method" value="X-ray"/>
    <property type="resolution" value="2.18 A"/>
    <property type="chains" value="A/B/C/D=439-779"/>
</dbReference>
<dbReference type="PDB" id="5SFD">
    <property type="method" value="X-ray"/>
    <property type="resolution" value="2.05 A"/>
    <property type="chains" value="A/B/C/D=439-779"/>
</dbReference>
<dbReference type="PDB" id="5SFE">
    <property type="method" value="X-ray"/>
    <property type="resolution" value="1.86 A"/>
    <property type="chains" value="A/B/C/D=439-779"/>
</dbReference>
<dbReference type="PDB" id="5SFF">
    <property type="method" value="X-ray"/>
    <property type="resolution" value="2.16 A"/>
    <property type="chains" value="A/B/C/D=439-779"/>
</dbReference>
<dbReference type="PDB" id="5SFG">
    <property type="method" value="X-ray"/>
    <property type="resolution" value="2.31 A"/>
    <property type="chains" value="A/B/C/D=439-779"/>
</dbReference>
<dbReference type="PDB" id="5SFH">
    <property type="method" value="X-ray"/>
    <property type="resolution" value="2.29 A"/>
    <property type="chains" value="A/B/C/D=439-779"/>
</dbReference>
<dbReference type="PDB" id="5SFI">
    <property type="method" value="X-ray"/>
    <property type="resolution" value="2.01 A"/>
    <property type="chains" value="A/B/C/D=439-779"/>
</dbReference>
<dbReference type="PDB" id="5SFJ">
    <property type="method" value="X-ray"/>
    <property type="resolution" value="2.41 A"/>
    <property type="chains" value="A/B/C/D=439-779"/>
</dbReference>
<dbReference type="PDB" id="5SFK">
    <property type="method" value="X-ray"/>
    <property type="resolution" value="2.33 A"/>
    <property type="chains" value="A/B/C/D=439-779"/>
</dbReference>
<dbReference type="PDB" id="5SFL">
    <property type="method" value="X-ray"/>
    <property type="resolution" value="2.13 A"/>
    <property type="chains" value="A/B/C/D=439-779"/>
</dbReference>
<dbReference type="PDB" id="5SFM">
    <property type="method" value="X-ray"/>
    <property type="resolution" value="2.16 A"/>
    <property type="chains" value="A/B/C/D=439-779"/>
</dbReference>
<dbReference type="PDB" id="5SFN">
    <property type="method" value="X-ray"/>
    <property type="resolution" value="2.02 A"/>
    <property type="chains" value="A/B/C/D=439-779"/>
</dbReference>
<dbReference type="PDB" id="5SFO">
    <property type="method" value="X-ray"/>
    <property type="resolution" value="1.96 A"/>
    <property type="chains" value="A/B/C/D=439-779"/>
</dbReference>
<dbReference type="PDB" id="5SFP">
    <property type="method" value="X-ray"/>
    <property type="resolution" value="2.00 A"/>
    <property type="chains" value="A/B/C/D=439-779"/>
</dbReference>
<dbReference type="PDB" id="5SFQ">
    <property type="method" value="X-ray"/>
    <property type="resolution" value="2.21 A"/>
    <property type="chains" value="A/B/C/D=439-779"/>
</dbReference>
<dbReference type="PDB" id="5SFR">
    <property type="method" value="X-ray"/>
    <property type="resolution" value="2.04 A"/>
    <property type="chains" value="A/B/C/D=439-779"/>
</dbReference>
<dbReference type="PDB" id="5SFS">
    <property type="method" value="X-ray"/>
    <property type="resolution" value="2.24 A"/>
    <property type="chains" value="A/B/C/D=439-779"/>
</dbReference>
<dbReference type="PDB" id="5SFT">
    <property type="method" value="X-ray"/>
    <property type="resolution" value="2.32 A"/>
    <property type="chains" value="A/B/C/D=439-779"/>
</dbReference>
<dbReference type="PDB" id="5SFU">
    <property type="method" value="X-ray"/>
    <property type="resolution" value="2.40 A"/>
    <property type="chains" value="A/B/C/D=439-779"/>
</dbReference>
<dbReference type="PDB" id="5SFV">
    <property type="method" value="X-ray"/>
    <property type="resolution" value="2.41 A"/>
    <property type="chains" value="A/B/C/D=439-779"/>
</dbReference>
<dbReference type="PDB" id="5SFW">
    <property type="method" value="X-ray"/>
    <property type="resolution" value="2.15 A"/>
    <property type="chains" value="A/B/C/D=439-779"/>
</dbReference>
<dbReference type="PDB" id="5SFX">
    <property type="method" value="X-ray"/>
    <property type="resolution" value="2.04 A"/>
    <property type="chains" value="A/B/C/D=439-779"/>
</dbReference>
<dbReference type="PDB" id="5SFY">
    <property type="method" value="X-ray"/>
    <property type="resolution" value="2.08 A"/>
    <property type="chains" value="A/B/C/D=439-779"/>
</dbReference>
<dbReference type="PDB" id="5SFZ">
    <property type="method" value="X-ray"/>
    <property type="resolution" value="2.16 A"/>
    <property type="chains" value="A/B/C/D=439-779"/>
</dbReference>
<dbReference type="PDB" id="5SG0">
    <property type="method" value="X-ray"/>
    <property type="resolution" value="2.06 A"/>
    <property type="chains" value="A/B/C/D=439-779"/>
</dbReference>
<dbReference type="PDB" id="5SG1">
    <property type="method" value="X-ray"/>
    <property type="resolution" value="2.41 A"/>
    <property type="chains" value="A/B/C/D=439-779"/>
</dbReference>
<dbReference type="PDB" id="5SG2">
    <property type="method" value="X-ray"/>
    <property type="resolution" value="2.15 A"/>
    <property type="chains" value="A/B/C/D=439-779"/>
</dbReference>
<dbReference type="PDB" id="5SG3">
    <property type="method" value="X-ray"/>
    <property type="resolution" value="1.98 A"/>
    <property type="chains" value="A/B/C/D=439-779"/>
</dbReference>
<dbReference type="PDB" id="5SG4">
    <property type="method" value="X-ray"/>
    <property type="resolution" value="2.30 A"/>
    <property type="chains" value="A=439-779"/>
</dbReference>
<dbReference type="PDB" id="5SG5">
    <property type="method" value="X-ray"/>
    <property type="resolution" value="2.17 A"/>
    <property type="chains" value="A/B/C/D=439-779"/>
</dbReference>
<dbReference type="PDB" id="5SG6">
    <property type="method" value="X-ray"/>
    <property type="resolution" value="1.96 A"/>
    <property type="chains" value="A/B/C/D=439-779"/>
</dbReference>
<dbReference type="PDB" id="5SG7">
    <property type="method" value="X-ray"/>
    <property type="resolution" value="2.30 A"/>
    <property type="chains" value="A/B/C/D=439-779"/>
</dbReference>
<dbReference type="PDB" id="5SG8">
    <property type="method" value="X-ray"/>
    <property type="resolution" value="2.16 A"/>
    <property type="chains" value="A/B/C/D=439-779"/>
</dbReference>
<dbReference type="PDB" id="5SG9">
    <property type="method" value="X-ray"/>
    <property type="resolution" value="2.13 A"/>
    <property type="chains" value="A/B/C/D=439-779"/>
</dbReference>
<dbReference type="PDB" id="5SGB">
    <property type="method" value="X-ray"/>
    <property type="resolution" value="2.39 A"/>
    <property type="chains" value="A/B/C/D=439-779"/>
</dbReference>
<dbReference type="PDB" id="5SGC">
    <property type="method" value="X-ray"/>
    <property type="resolution" value="2.09 A"/>
    <property type="chains" value="A/B/C/D=439-779"/>
</dbReference>
<dbReference type="PDB" id="5SGD">
    <property type="method" value="X-ray"/>
    <property type="resolution" value="2.54 A"/>
    <property type="chains" value="A/B/C/D=439-779"/>
</dbReference>
<dbReference type="PDB" id="5SGE">
    <property type="method" value="X-ray"/>
    <property type="resolution" value="2.20 A"/>
    <property type="chains" value="A/B/C/D=439-779"/>
</dbReference>
<dbReference type="PDB" id="5SGF">
    <property type="method" value="X-ray"/>
    <property type="resolution" value="2.30 A"/>
    <property type="chains" value="A/B/C/D=439-779"/>
</dbReference>
<dbReference type="PDB" id="5SGG">
    <property type="method" value="X-ray"/>
    <property type="resolution" value="2.09 A"/>
    <property type="chains" value="A/B/C/D=439-779"/>
</dbReference>
<dbReference type="PDB" id="5SGH">
    <property type="method" value="X-ray"/>
    <property type="resolution" value="1.97 A"/>
    <property type="chains" value="A/B/C/D=439-779"/>
</dbReference>
<dbReference type="PDB" id="5SGI">
    <property type="method" value="X-ray"/>
    <property type="resolution" value="1.97 A"/>
    <property type="chains" value="A/B/C/D=439-779"/>
</dbReference>
<dbReference type="PDB" id="5SGJ">
    <property type="method" value="X-ray"/>
    <property type="resolution" value="2.66 A"/>
    <property type="chains" value="A/B/C/D=439-779"/>
</dbReference>
<dbReference type="PDB" id="5SGK">
    <property type="method" value="X-ray"/>
    <property type="resolution" value="2.13 A"/>
    <property type="chains" value="A/B/C/D=439-779"/>
</dbReference>
<dbReference type="PDB" id="5SGL">
    <property type="method" value="X-ray"/>
    <property type="resolution" value="2.28 A"/>
    <property type="chains" value="A/B/C/D=439-779"/>
</dbReference>
<dbReference type="PDB" id="5SGM">
    <property type="method" value="X-ray"/>
    <property type="resolution" value="2.20 A"/>
    <property type="chains" value="A=439-779"/>
</dbReference>
<dbReference type="PDB" id="5SGN">
    <property type="method" value="X-ray"/>
    <property type="resolution" value="2.07 A"/>
    <property type="chains" value="A/B/C/D=439-779"/>
</dbReference>
<dbReference type="PDB" id="5SGO">
    <property type="method" value="X-ray"/>
    <property type="resolution" value="2.30 A"/>
    <property type="chains" value="A/B/C/D=439-779"/>
</dbReference>
<dbReference type="PDB" id="5SGP">
    <property type="method" value="X-ray"/>
    <property type="resolution" value="1.95 A"/>
    <property type="chains" value="A/B/C/D=439-779"/>
</dbReference>
<dbReference type="PDB" id="5SGQ">
    <property type="method" value="X-ray"/>
    <property type="resolution" value="2.04 A"/>
    <property type="chains" value="A/B/C/D=439-779"/>
</dbReference>
<dbReference type="PDB" id="5SGR">
    <property type="method" value="X-ray"/>
    <property type="resolution" value="2.04 A"/>
    <property type="chains" value="A/B/C/D=439-779"/>
</dbReference>
<dbReference type="PDB" id="5SGS">
    <property type="method" value="X-ray"/>
    <property type="resolution" value="2.03 A"/>
    <property type="chains" value="A/B/C/D=439-779"/>
</dbReference>
<dbReference type="PDB" id="5SGT">
    <property type="method" value="X-ray"/>
    <property type="resolution" value="2.26 A"/>
    <property type="chains" value="A/B/C/D=439-779"/>
</dbReference>
<dbReference type="PDB" id="5SGU">
    <property type="method" value="X-ray"/>
    <property type="resolution" value="2.14 A"/>
    <property type="chains" value="A/B/C/D=439-779"/>
</dbReference>
<dbReference type="PDB" id="5SGV">
    <property type="method" value="X-ray"/>
    <property type="resolution" value="2.00 A"/>
    <property type="chains" value="A/B/C/D=439-779"/>
</dbReference>
<dbReference type="PDB" id="5SGW">
    <property type="method" value="X-ray"/>
    <property type="resolution" value="1.90 A"/>
    <property type="chains" value="A/B/C/D=439-779"/>
</dbReference>
<dbReference type="PDB" id="5SGX">
    <property type="method" value="X-ray"/>
    <property type="resolution" value="1.93 A"/>
    <property type="chains" value="A/B/C/D=439-779"/>
</dbReference>
<dbReference type="PDB" id="5SGY">
    <property type="method" value="X-ray"/>
    <property type="resolution" value="2.36 A"/>
    <property type="chains" value="A/B/C/D=439-779"/>
</dbReference>
<dbReference type="PDB" id="5SGZ">
    <property type="method" value="X-ray"/>
    <property type="resolution" value="2.20 A"/>
    <property type="chains" value="A/B/C/D=439-779"/>
</dbReference>
<dbReference type="PDB" id="5SH0">
    <property type="method" value="X-ray"/>
    <property type="resolution" value="2.29 A"/>
    <property type="chains" value="A/B/C/D=439-779"/>
</dbReference>
<dbReference type="PDB" id="5SH1">
    <property type="method" value="X-ray"/>
    <property type="resolution" value="2.20 A"/>
    <property type="chains" value="A/B/C/D=439-779"/>
</dbReference>
<dbReference type="PDB" id="5SH2">
    <property type="method" value="X-ray"/>
    <property type="resolution" value="2.19 A"/>
    <property type="chains" value="A/B/C/D=439-779"/>
</dbReference>
<dbReference type="PDB" id="5SH3">
    <property type="method" value="X-ray"/>
    <property type="resolution" value="1.98 A"/>
    <property type="chains" value="A/B/C/D=439-779"/>
</dbReference>
<dbReference type="PDB" id="5SH4">
    <property type="method" value="X-ray"/>
    <property type="resolution" value="2.22 A"/>
    <property type="chains" value="A/B/C/D=439-779"/>
</dbReference>
<dbReference type="PDB" id="5SH5">
    <property type="method" value="X-ray"/>
    <property type="resolution" value="2.30 A"/>
    <property type="chains" value="A/B/C/D=439-779"/>
</dbReference>
<dbReference type="PDB" id="5SH6">
    <property type="method" value="X-ray"/>
    <property type="resolution" value="1.98 A"/>
    <property type="chains" value="A/B/C/D=439-779"/>
</dbReference>
<dbReference type="PDB" id="5SH7">
    <property type="method" value="X-ray"/>
    <property type="resolution" value="2.66 A"/>
    <property type="chains" value="A/B/C/D=439-779"/>
</dbReference>
<dbReference type="PDB" id="5SH8">
    <property type="method" value="X-ray"/>
    <property type="resolution" value="2.00 A"/>
    <property type="chains" value="A/B/C/D=439-779"/>
</dbReference>
<dbReference type="PDB" id="5SH9">
    <property type="method" value="X-ray"/>
    <property type="resolution" value="2.06 A"/>
    <property type="chains" value="A/B/C/D=439-779"/>
</dbReference>
<dbReference type="PDB" id="5SHA">
    <property type="method" value="X-ray"/>
    <property type="resolution" value="2.24 A"/>
    <property type="chains" value="A/B/C/D=439-779"/>
</dbReference>
<dbReference type="PDB" id="5SHB">
    <property type="method" value="X-ray"/>
    <property type="resolution" value="1.95 A"/>
    <property type="chains" value="A/B/C/D=439-779"/>
</dbReference>
<dbReference type="PDB" id="5SHC">
    <property type="method" value="X-ray"/>
    <property type="resolution" value="2.33 A"/>
    <property type="chains" value="A/B/C/D=439-779"/>
</dbReference>
<dbReference type="PDB" id="5SHD">
    <property type="method" value="X-ray"/>
    <property type="resolution" value="2.60 A"/>
    <property type="chains" value="A/B/C/D=439-779"/>
</dbReference>
<dbReference type="PDB" id="5SHE">
    <property type="method" value="X-ray"/>
    <property type="resolution" value="2.19 A"/>
    <property type="chains" value="A/B/C/D=439-779"/>
</dbReference>
<dbReference type="PDB" id="5SHF">
    <property type="method" value="X-ray"/>
    <property type="resolution" value="2.28 A"/>
    <property type="chains" value="A/B/C/D=439-779"/>
</dbReference>
<dbReference type="PDB" id="5SHG">
    <property type="method" value="X-ray"/>
    <property type="resolution" value="2.12 A"/>
    <property type="chains" value="A/B/C/D=439-779"/>
</dbReference>
<dbReference type="PDB" id="5SHH">
    <property type="method" value="X-ray"/>
    <property type="resolution" value="2.15 A"/>
    <property type="chains" value="A/B/C/D=439-779"/>
</dbReference>
<dbReference type="PDB" id="5SHI">
    <property type="method" value="X-ray"/>
    <property type="resolution" value="2.10 A"/>
    <property type="chains" value="A/B/C/D=439-779"/>
</dbReference>
<dbReference type="PDB" id="5SHJ">
    <property type="method" value="X-ray"/>
    <property type="resolution" value="2.30 A"/>
    <property type="chains" value="A/B/C/D=439-779"/>
</dbReference>
<dbReference type="PDB" id="5SHK">
    <property type="method" value="X-ray"/>
    <property type="resolution" value="2.00 A"/>
    <property type="chains" value="A/B/C/D=439-779"/>
</dbReference>
<dbReference type="PDB" id="5SHL">
    <property type="method" value="X-ray"/>
    <property type="resolution" value="2.35 A"/>
    <property type="chains" value="A/B/C/D=439-779"/>
</dbReference>
<dbReference type="PDB" id="5SHM">
    <property type="method" value="X-ray"/>
    <property type="resolution" value="2.26 A"/>
    <property type="chains" value="A/B/C/D=439-779"/>
</dbReference>
<dbReference type="PDB" id="5SHN">
    <property type="method" value="X-ray"/>
    <property type="resolution" value="2.03 A"/>
    <property type="chains" value="A/B/C/D=439-779"/>
</dbReference>
<dbReference type="PDB" id="5SHO">
    <property type="method" value="X-ray"/>
    <property type="resolution" value="1.90 A"/>
    <property type="chains" value="A=439-779"/>
</dbReference>
<dbReference type="PDB" id="5SHP">
    <property type="method" value="X-ray"/>
    <property type="resolution" value="2.18 A"/>
    <property type="chains" value="A/B/C/D=439-779"/>
</dbReference>
<dbReference type="PDB" id="5SHQ">
    <property type="method" value="X-ray"/>
    <property type="resolution" value="2.08 A"/>
    <property type="chains" value="A/B/C/D=439-779"/>
</dbReference>
<dbReference type="PDB" id="5SHR">
    <property type="method" value="X-ray"/>
    <property type="resolution" value="1.98 A"/>
    <property type="chains" value="A/B/C/D=439-779"/>
</dbReference>
<dbReference type="PDB" id="5SHS">
    <property type="method" value="X-ray"/>
    <property type="resolution" value="2.30 A"/>
    <property type="chains" value="A/B/C/D=439-779"/>
</dbReference>
<dbReference type="PDB" id="5SHT">
    <property type="method" value="X-ray"/>
    <property type="resolution" value="2.27 A"/>
    <property type="chains" value="A/B/C/D=439-779"/>
</dbReference>
<dbReference type="PDB" id="5SHU">
    <property type="method" value="X-ray"/>
    <property type="resolution" value="1.98 A"/>
    <property type="chains" value="A/B/C/D=439-779"/>
</dbReference>
<dbReference type="PDB" id="5SHV">
    <property type="method" value="X-ray"/>
    <property type="resolution" value="1.95 A"/>
    <property type="chains" value="A/B/C/D=439-779"/>
</dbReference>
<dbReference type="PDB" id="5SHW">
    <property type="method" value="X-ray"/>
    <property type="resolution" value="2.19 A"/>
    <property type="chains" value="A/B/C/D=439-779"/>
</dbReference>
<dbReference type="PDB" id="5SHX">
    <property type="method" value="X-ray"/>
    <property type="resolution" value="2.16 A"/>
    <property type="chains" value="A/B/C/D=439-779"/>
</dbReference>
<dbReference type="PDB" id="5SHY">
    <property type="method" value="X-ray"/>
    <property type="resolution" value="2.30 A"/>
    <property type="chains" value="A=439-779"/>
</dbReference>
<dbReference type="PDB" id="5SHZ">
    <property type="method" value="X-ray"/>
    <property type="resolution" value="2.55 A"/>
    <property type="chains" value="A/B/C/D=439-779"/>
</dbReference>
<dbReference type="PDB" id="5SI0">
    <property type="method" value="X-ray"/>
    <property type="resolution" value="2.27 A"/>
    <property type="chains" value="A/B/C/D=439-779"/>
</dbReference>
<dbReference type="PDB" id="5SI1">
    <property type="method" value="X-ray"/>
    <property type="resolution" value="1.75 A"/>
    <property type="chains" value="A=439-779"/>
</dbReference>
<dbReference type="PDB" id="5SI2">
    <property type="method" value="X-ray"/>
    <property type="resolution" value="2.40 A"/>
    <property type="chains" value="A/B/C/D=439-779"/>
</dbReference>
<dbReference type="PDB" id="5SI3">
    <property type="method" value="X-ray"/>
    <property type="resolution" value="2.40 A"/>
    <property type="chains" value="A/B/C/D=439-779"/>
</dbReference>
<dbReference type="PDB" id="5SI4">
    <property type="method" value="X-ray"/>
    <property type="resolution" value="2.39 A"/>
    <property type="chains" value="A/B/C/D=439-779"/>
</dbReference>
<dbReference type="PDB" id="5SI5">
    <property type="method" value="X-ray"/>
    <property type="resolution" value="2.27 A"/>
    <property type="chains" value="A/B/C/D=439-779"/>
</dbReference>
<dbReference type="PDB" id="5SI6">
    <property type="method" value="X-ray"/>
    <property type="resolution" value="2.00 A"/>
    <property type="chains" value="A/B/C/D=439-779"/>
</dbReference>
<dbReference type="PDB" id="5SI7">
    <property type="method" value="X-ray"/>
    <property type="resolution" value="2.10 A"/>
    <property type="chains" value="A/B/C/D=439-779"/>
</dbReference>
<dbReference type="PDB" id="5SI8">
    <property type="method" value="X-ray"/>
    <property type="resolution" value="2.10 A"/>
    <property type="chains" value="A/B/C/D=439-779"/>
</dbReference>
<dbReference type="PDB" id="5SI9">
    <property type="method" value="X-ray"/>
    <property type="resolution" value="2.01 A"/>
    <property type="chains" value="A/B/C/D=439-779"/>
</dbReference>
<dbReference type="PDB" id="5SIA">
    <property type="method" value="X-ray"/>
    <property type="resolution" value="2.27 A"/>
    <property type="chains" value="A/B/C/D=439-779"/>
</dbReference>
<dbReference type="PDB" id="5SIB">
    <property type="method" value="X-ray"/>
    <property type="resolution" value="2.54 A"/>
    <property type="chains" value="A/B/C/D=439-779"/>
</dbReference>
<dbReference type="PDB" id="5SID">
    <property type="method" value="X-ray"/>
    <property type="resolution" value="1.98 A"/>
    <property type="chains" value="A/B/C/D=439-779"/>
</dbReference>
<dbReference type="PDB" id="5SIE">
    <property type="method" value="X-ray"/>
    <property type="resolution" value="2.12 A"/>
    <property type="chains" value="A/B/C/D=439-779"/>
</dbReference>
<dbReference type="PDB" id="5SIF">
    <property type="method" value="X-ray"/>
    <property type="resolution" value="2.20 A"/>
    <property type="chains" value="A/B/C/D=439-779"/>
</dbReference>
<dbReference type="PDB" id="5SIG">
    <property type="method" value="X-ray"/>
    <property type="resolution" value="2.03 A"/>
    <property type="chains" value="A/B/C/D=439-779"/>
</dbReference>
<dbReference type="PDB" id="5SIH">
    <property type="method" value="X-ray"/>
    <property type="resolution" value="1.90 A"/>
    <property type="chains" value="A/B/C/D=439-779"/>
</dbReference>
<dbReference type="PDB" id="5SII">
    <property type="method" value="X-ray"/>
    <property type="resolution" value="2.18 A"/>
    <property type="chains" value="A/B/C/D=439-779"/>
</dbReference>
<dbReference type="PDB" id="5SIJ">
    <property type="method" value="X-ray"/>
    <property type="resolution" value="2.55 A"/>
    <property type="chains" value="A/B/C/D=439-779"/>
</dbReference>
<dbReference type="PDB" id="5SIK">
    <property type="method" value="X-ray"/>
    <property type="resolution" value="2.10 A"/>
    <property type="chains" value="A/B/C/D=439-779"/>
</dbReference>
<dbReference type="PDB" id="5SIL">
    <property type="method" value="X-ray"/>
    <property type="resolution" value="2.50 A"/>
    <property type="chains" value="A=439-779"/>
</dbReference>
<dbReference type="PDB" id="5SIM">
    <property type="method" value="X-ray"/>
    <property type="resolution" value="1.75 A"/>
    <property type="chains" value="A=439-779"/>
</dbReference>
<dbReference type="PDB" id="5SIN">
    <property type="method" value="X-ray"/>
    <property type="resolution" value="2.40 A"/>
    <property type="chains" value="A/B/C/D=439-779"/>
</dbReference>
<dbReference type="PDB" id="5SIO">
    <property type="method" value="X-ray"/>
    <property type="resolution" value="2.20 A"/>
    <property type="chains" value="A/B/C/D=439-779"/>
</dbReference>
<dbReference type="PDB" id="5SIP">
    <property type="method" value="X-ray"/>
    <property type="resolution" value="2.03 A"/>
    <property type="chains" value="A/B/C/D=439-779"/>
</dbReference>
<dbReference type="PDB" id="5SIQ">
    <property type="method" value="X-ray"/>
    <property type="resolution" value="1.97 A"/>
    <property type="chains" value="A/B/C/D=439-779"/>
</dbReference>
<dbReference type="PDB" id="5SIR">
    <property type="method" value="X-ray"/>
    <property type="resolution" value="2.50 A"/>
    <property type="chains" value="A/B/C/D=439-779"/>
</dbReference>
<dbReference type="PDB" id="5SIS">
    <property type="method" value="X-ray"/>
    <property type="resolution" value="1.85 A"/>
    <property type="chains" value="A=439-779"/>
</dbReference>
<dbReference type="PDB" id="5SIT">
    <property type="method" value="X-ray"/>
    <property type="resolution" value="1.99 A"/>
    <property type="chains" value="A/B/C/D=439-779"/>
</dbReference>
<dbReference type="PDB" id="5SIU">
    <property type="method" value="X-ray"/>
    <property type="resolution" value="2.01 A"/>
    <property type="chains" value="A/B/C/D=439-779"/>
</dbReference>
<dbReference type="PDB" id="5SIV">
    <property type="method" value="X-ray"/>
    <property type="resolution" value="2.20 A"/>
    <property type="chains" value="A/B/C/D=439-779"/>
</dbReference>
<dbReference type="PDB" id="5SIW">
    <property type="method" value="X-ray"/>
    <property type="resolution" value="2.13 A"/>
    <property type="chains" value="A/B/C/D=439-779"/>
</dbReference>
<dbReference type="PDB" id="5SIX">
    <property type="method" value="X-ray"/>
    <property type="resolution" value="2.29 A"/>
    <property type="chains" value="A=439-779"/>
</dbReference>
<dbReference type="PDB" id="5SIY">
    <property type="method" value="X-ray"/>
    <property type="resolution" value="2.03 A"/>
    <property type="chains" value="A/B/C/D=439-779"/>
</dbReference>
<dbReference type="PDB" id="5SIZ">
    <property type="method" value="X-ray"/>
    <property type="resolution" value="2.10 A"/>
    <property type="chains" value="A/B/C/D=439-779"/>
</dbReference>
<dbReference type="PDB" id="5SJ0">
    <property type="method" value="X-ray"/>
    <property type="resolution" value="2.35 A"/>
    <property type="chains" value="A/B/C/D=439-779"/>
</dbReference>
<dbReference type="PDB" id="5SJ1">
    <property type="method" value="X-ray"/>
    <property type="resolution" value="2.16 A"/>
    <property type="chains" value="A/B/C/D=439-779"/>
</dbReference>
<dbReference type="PDB" id="5SJ2">
    <property type="method" value="X-ray"/>
    <property type="resolution" value="1.99 A"/>
    <property type="chains" value="A/B/C/D=439-779"/>
</dbReference>
<dbReference type="PDB" id="5SJ3">
    <property type="method" value="X-ray"/>
    <property type="resolution" value="2.10 A"/>
    <property type="chains" value="A/B/C/D=439-779"/>
</dbReference>
<dbReference type="PDB" id="5SJ4">
    <property type="method" value="X-ray"/>
    <property type="resolution" value="2.77 A"/>
    <property type="chains" value="A/B/C/D=439-779"/>
</dbReference>
<dbReference type="PDB" id="5SJ5">
    <property type="method" value="X-ray"/>
    <property type="resolution" value="2.49 A"/>
    <property type="chains" value="A/B/C/D=439-779"/>
</dbReference>
<dbReference type="PDB" id="5SJ6">
    <property type="method" value="X-ray"/>
    <property type="resolution" value="2.15 A"/>
    <property type="chains" value="A/B/C/D=439-779"/>
</dbReference>
<dbReference type="PDB" id="5SJ7">
    <property type="method" value="X-ray"/>
    <property type="resolution" value="2.14 A"/>
    <property type="chains" value="A/B/C/D=439-779"/>
</dbReference>
<dbReference type="PDB" id="5SJ8">
    <property type="method" value="X-ray"/>
    <property type="resolution" value="2.49 A"/>
    <property type="chains" value="A/B/C/D=439-779"/>
</dbReference>
<dbReference type="PDB" id="5SJ9">
    <property type="method" value="X-ray"/>
    <property type="resolution" value="2.39 A"/>
    <property type="chains" value="A/B/C/D=439-779"/>
</dbReference>
<dbReference type="PDB" id="5SJA">
    <property type="method" value="X-ray"/>
    <property type="resolution" value="2.13 A"/>
    <property type="chains" value="A/B/C/D=439-779"/>
</dbReference>
<dbReference type="PDB" id="5SJB">
    <property type="method" value="X-ray"/>
    <property type="resolution" value="2.20 A"/>
    <property type="chains" value="A/B/C/D=439-779"/>
</dbReference>
<dbReference type="PDB" id="5SJC">
    <property type="method" value="X-ray"/>
    <property type="resolution" value="2.08 A"/>
    <property type="chains" value="A=439-779"/>
</dbReference>
<dbReference type="PDB" id="5SJD">
    <property type="method" value="X-ray"/>
    <property type="resolution" value="2.16 A"/>
    <property type="chains" value="A/B/C/D=439-779"/>
</dbReference>
<dbReference type="PDB" id="5SJE">
    <property type="method" value="X-ray"/>
    <property type="resolution" value="2.10 A"/>
    <property type="chains" value="A/B/C/D=439-779"/>
</dbReference>
<dbReference type="PDB" id="5SJF">
    <property type="method" value="X-ray"/>
    <property type="resolution" value="2.05 A"/>
    <property type="chains" value="A/B/C/D=439-779"/>
</dbReference>
<dbReference type="PDB" id="5SJG">
    <property type="method" value="X-ray"/>
    <property type="resolution" value="1.97 A"/>
    <property type="chains" value="A/B/C/D=439-779"/>
</dbReference>
<dbReference type="PDB" id="5SJH">
    <property type="method" value="X-ray"/>
    <property type="resolution" value="2.10 A"/>
    <property type="chains" value="A/B/C/D=439-779"/>
</dbReference>
<dbReference type="PDB" id="5SJI">
    <property type="method" value="X-ray"/>
    <property type="resolution" value="1.98 A"/>
    <property type="chains" value="A/B/C/D=439-779"/>
</dbReference>
<dbReference type="PDB" id="5SJJ">
    <property type="method" value="X-ray"/>
    <property type="resolution" value="2.10 A"/>
    <property type="chains" value="A/B/C/D=439-779"/>
</dbReference>
<dbReference type="PDB" id="5SJK">
    <property type="method" value="X-ray"/>
    <property type="resolution" value="2.24 A"/>
    <property type="chains" value="A/B/C/D=439-779"/>
</dbReference>
<dbReference type="PDB" id="5SJL">
    <property type="method" value="X-ray"/>
    <property type="resolution" value="2.64 A"/>
    <property type="chains" value="A/B/C/D=439-779"/>
</dbReference>
<dbReference type="PDB" id="5SJM">
    <property type="method" value="X-ray"/>
    <property type="resolution" value="2.30 A"/>
    <property type="chains" value="A/B/C/D=439-779"/>
</dbReference>
<dbReference type="PDB" id="5SJN">
    <property type="method" value="X-ray"/>
    <property type="resolution" value="2.05 A"/>
    <property type="chains" value="A/B/C/D=439-779"/>
</dbReference>
<dbReference type="PDB" id="5SJO">
    <property type="method" value="X-ray"/>
    <property type="resolution" value="2.10 A"/>
    <property type="chains" value="A/B/C/D=439-779"/>
</dbReference>
<dbReference type="PDB" id="5SJP">
    <property type="method" value="X-ray"/>
    <property type="resolution" value="2.25 A"/>
    <property type="chains" value="A/B/C/D=439-779"/>
</dbReference>
<dbReference type="PDB" id="5SJQ">
    <property type="method" value="X-ray"/>
    <property type="resolution" value="2.12 A"/>
    <property type="chains" value="A/B/C/D=439-779"/>
</dbReference>
<dbReference type="PDB" id="5SJR">
    <property type="method" value="X-ray"/>
    <property type="resolution" value="2.10 A"/>
    <property type="chains" value="A/B/C/D=439-779"/>
</dbReference>
<dbReference type="PDB" id="5SJS">
    <property type="method" value="X-ray"/>
    <property type="resolution" value="2.70 A"/>
    <property type="chains" value="A/B/C/D=439-779"/>
</dbReference>
<dbReference type="PDB" id="5SJT">
    <property type="method" value="X-ray"/>
    <property type="resolution" value="2.10 A"/>
    <property type="chains" value="A/B/C/D=439-779"/>
</dbReference>
<dbReference type="PDB" id="5SJU">
    <property type="method" value="X-ray"/>
    <property type="resolution" value="1.97 A"/>
    <property type="chains" value="A/B/C/D=439-779"/>
</dbReference>
<dbReference type="PDB" id="5SJV">
    <property type="method" value="X-ray"/>
    <property type="resolution" value="1.94 A"/>
    <property type="chains" value="A/B/C/D=439-779"/>
</dbReference>
<dbReference type="PDB" id="5SJW">
    <property type="method" value="X-ray"/>
    <property type="resolution" value="1.95 A"/>
    <property type="chains" value="A/B/C/D=439-779"/>
</dbReference>
<dbReference type="PDB" id="5SJX">
    <property type="method" value="X-ray"/>
    <property type="resolution" value="2.06 A"/>
    <property type="chains" value="A/B/C/D=439-779"/>
</dbReference>
<dbReference type="PDB" id="5SJY">
    <property type="method" value="X-ray"/>
    <property type="resolution" value="2.20 A"/>
    <property type="chains" value="A/B/C/D=439-779"/>
</dbReference>
<dbReference type="PDB" id="5SJZ">
    <property type="method" value="X-ray"/>
    <property type="resolution" value="2.19 A"/>
    <property type="chains" value="A/B/C/D=439-779"/>
</dbReference>
<dbReference type="PDB" id="5SK0">
    <property type="method" value="X-ray"/>
    <property type="resolution" value="2.02 A"/>
    <property type="chains" value="A/B/C/D=439-779"/>
</dbReference>
<dbReference type="PDB" id="5SK1">
    <property type="method" value="X-ray"/>
    <property type="resolution" value="2.30 A"/>
    <property type="chains" value="A/B/C/D=439-779"/>
</dbReference>
<dbReference type="PDB" id="5SK2">
    <property type="method" value="X-ray"/>
    <property type="resolution" value="2.14 A"/>
    <property type="chains" value="A/B/C/D=439-779"/>
</dbReference>
<dbReference type="PDB" id="5SK3">
    <property type="method" value="X-ray"/>
    <property type="resolution" value="2.32 A"/>
    <property type="chains" value="A/B/C/D=439-779"/>
</dbReference>
<dbReference type="PDB" id="5SK4">
    <property type="method" value="X-ray"/>
    <property type="resolution" value="2.00 A"/>
    <property type="chains" value="A/B/C/D=439-779"/>
</dbReference>
<dbReference type="PDB" id="5SK5">
    <property type="method" value="X-ray"/>
    <property type="resolution" value="1.95 A"/>
    <property type="chains" value="A/B/C/D=439-779"/>
</dbReference>
<dbReference type="PDB" id="5SK6">
    <property type="method" value="X-ray"/>
    <property type="resolution" value="2.20 A"/>
    <property type="chains" value="A/B/C/D=439-779"/>
</dbReference>
<dbReference type="PDB" id="5SK7">
    <property type="method" value="X-ray"/>
    <property type="resolution" value="2.29 A"/>
    <property type="chains" value="A/B/C/D=439-779"/>
</dbReference>
<dbReference type="PDB" id="5SK8">
    <property type="method" value="X-ray"/>
    <property type="resolution" value="2.30 A"/>
    <property type="chains" value="A=439-779"/>
</dbReference>
<dbReference type="PDB" id="5SK9">
    <property type="method" value="X-ray"/>
    <property type="resolution" value="2.82 A"/>
    <property type="chains" value="A/B/C/D=439-779"/>
</dbReference>
<dbReference type="PDB" id="5SKA">
    <property type="method" value="X-ray"/>
    <property type="resolution" value="2.21 A"/>
    <property type="chains" value="A/B/C/D=439-779"/>
</dbReference>
<dbReference type="PDB" id="5SKB">
    <property type="method" value="X-ray"/>
    <property type="resolution" value="2.35 A"/>
    <property type="chains" value="A/B/C/D=439-779"/>
</dbReference>
<dbReference type="PDB" id="5SKC">
    <property type="method" value="X-ray"/>
    <property type="resolution" value="2.60 A"/>
    <property type="chains" value="A/B/C/D=439-779"/>
</dbReference>
<dbReference type="PDB" id="5SKD">
    <property type="method" value="X-ray"/>
    <property type="resolution" value="2.30 A"/>
    <property type="chains" value="A/B/C/D=439-779"/>
</dbReference>
<dbReference type="PDB" id="5SKE">
    <property type="method" value="X-ray"/>
    <property type="resolution" value="2.20 A"/>
    <property type="chains" value="A/B/C/D=439-779"/>
</dbReference>
<dbReference type="PDB" id="5SKF">
    <property type="method" value="X-ray"/>
    <property type="resolution" value="2.10 A"/>
    <property type="chains" value="A/B/C/D=439-779"/>
</dbReference>
<dbReference type="PDB" id="5SKG">
    <property type="method" value="X-ray"/>
    <property type="resolution" value="2.03 A"/>
    <property type="chains" value="A/B/C/D=439-779"/>
</dbReference>
<dbReference type="PDB" id="5SKH">
    <property type="method" value="X-ray"/>
    <property type="resolution" value="2.10 A"/>
    <property type="chains" value="A/B/C/D=439-779"/>
</dbReference>
<dbReference type="PDB" id="5SKI">
    <property type="method" value="X-ray"/>
    <property type="resolution" value="2.16 A"/>
    <property type="chains" value="A/B/C/D=439-779"/>
</dbReference>
<dbReference type="PDB" id="5SKJ">
    <property type="method" value="X-ray"/>
    <property type="resolution" value="2.74 A"/>
    <property type="chains" value="A/B/C/D=439-779"/>
</dbReference>
<dbReference type="PDB" id="5SKK">
    <property type="method" value="X-ray"/>
    <property type="resolution" value="2.15 A"/>
    <property type="chains" value="A/B/C/D=439-779"/>
</dbReference>
<dbReference type="PDB" id="5SKL">
    <property type="method" value="X-ray"/>
    <property type="resolution" value="2.20 A"/>
    <property type="chains" value="A/B/C/D=439-779"/>
</dbReference>
<dbReference type="PDB" id="5SKM">
    <property type="method" value="X-ray"/>
    <property type="resolution" value="1.91 A"/>
    <property type="chains" value="A/B/C/D=439-779"/>
</dbReference>
<dbReference type="PDB" id="5SKN">
    <property type="method" value="X-ray"/>
    <property type="resolution" value="1.90 A"/>
    <property type="chains" value="A/B/C/D=439-779"/>
</dbReference>
<dbReference type="PDB" id="5SKO">
    <property type="method" value="X-ray"/>
    <property type="resolution" value="2.10 A"/>
    <property type="chains" value="A=439-779"/>
</dbReference>
<dbReference type="PDB" id="5SKP">
    <property type="method" value="X-ray"/>
    <property type="resolution" value="2.00 A"/>
    <property type="chains" value="A/B/C/D=439-779"/>
</dbReference>
<dbReference type="PDB" id="5SKQ">
    <property type="method" value="X-ray"/>
    <property type="resolution" value="2.00 A"/>
    <property type="chains" value="A/B/C/D=439-779"/>
</dbReference>
<dbReference type="PDB" id="5SKR">
    <property type="method" value="X-ray"/>
    <property type="resolution" value="1.99 A"/>
    <property type="chains" value="A/B/C/D=439-779"/>
</dbReference>
<dbReference type="PDB" id="5SKS">
    <property type="method" value="X-ray"/>
    <property type="resolution" value="2.31 A"/>
    <property type="chains" value="A/B/C/D=439-779"/>
</dbReference>
<dbReference type="PDB" id="5SKT">
    <property type="method" value="X-ray"/>
    <property type="resolution" value="2.02 A"/>
    <property type="chains" value="A/B/C/D=439-779"/>
</dbReference>
<dbReference type="PDB" id="5SKU">
    <property type="method" value="X-ray"/>
    <property type="resolution" value="2.20 A"/>
    <property type="chains" value="A/B/C/D=439-779"/>
</dbReference>
<dbReference type="PDB" id="5SKV">
    <property type="method" value="X-ray"/>
    <property type="resolution" value="2.60 A"/>
    <property type="chains" value="A/B/C/D=439-779"/>
</dbReference>
<dbReference type="PDB" id="5UWF">
    <property type="method" value="X-ray"/>
    <property type="resolution" value="1.87 A"/>
    <property type="chains" value="C/D=439-779"/>
</dbReference>
<dbReference type="PDB" id="5XUI">
    <property type="method" value="X-ray"/>
    <property type="resolution" value="2.77 A"/>
    <property type="chains" value="A/B=439-779"/>
</dbReference>
<dbReference type="PDB" id="5XUJ">
    <property type="method" value="X-ray"/>
    <property type="resolution" value="2.44 A"/>
    <property type="chains" value="A/B=439-779"/>
</dbReference>
<dbReference type="PDB" id="5ZNL">
    <property type="method" value="X-ray"/>
    <property type="resolution" value="2.80 A"/>
    <property type="chains" value="A/B=439-760"/>
</dbReference>
<dbReference type="PDB" id="6IJH">
    <property type="method" value="X-ray"/>
    <property type="resolution" value="2.60 A"/>
    <property type="chains" value="A/B=439-779"/>
</dbReference>
<dbReference type="PDB" id="6IJI">
    <property type="method" value="X-ray"/>
    <property type="resolution" value="2.70 A"/>
    <property type="chains" value="A/B=439-760"/>
</dbReference>
<dbReference type="PDB" id="6KDX">
    <property type="method" value="X-ray"/>
    <property type="resolution" value="2.44 A"/>
    <property type="chains" value="A/B=439-779"/>
</dbReference>
<dbReference type="PDB" id="6KDZ">
    <property type="method" value="X-ray"/>
    <property type="resolution" value="3.10 A"/>
    <property type="chains" value="A/B=439-779"/>
</dbReference>
<dbReference type="PDB" id="6KE0">
    <property type="method" value="X-ray"/>
    <property type="resolution" value="2.95 A"/>
    <property type="chains" value="A/B=439-779"/>
</dbReference>
<dbReference type="PDB" id="6KO0">
    <property type="method" value="X-ray"/>
    <property type="resolution" value="2.60 A"/>
    <property type="chains" value="A/B=439-759"/>
</dbReference>
<dbReference type="PDB" id="6KO1">
    <property type="method" value="X-ray"/>
    <property type="resolution" value="2.70 A"/>
    <property type="chains" value="A/B=439-759"/>
</dbReference>
<dbReference type="PDB" id="6KZE">
    <property type="method" value="X-ray"/>
    <property type="resolution" value="2.50 A"/>
    <property type="chains" value="A/B=439-760"/>
</dbReference>
<dbReference type="PDB" id="6MSA">
    <property type="method" value="X-ray"/>
    <property type="resolution" value="2.06 A"/>
    <property type="chains" value="A/B=439-766"/>
</dbReference>
<dbReference type="PDB" id="6MSC">
    <property type="method" value="X-ray"/>
    <property type="resolution" value="2.36 A"/>
    <property type="chains" value="A/B=439-766"/>
</dbReference>
<dbReference type="PDB" id="7BPI">
    <property type="method" value="X-ray"/>
    <property type="resolution" value="2.40 A"/>
    <property type="chains" value="A/B=439-760"/>
</dbReference>
<dbReference type="PDB" id="7QPF">
    <property type="method" value="X-ray"/>
    <property type="resolution" value="1.70 A"/>
    <property type="chains" value="A/B=432-764"/>
</dbReference>
<dbReference type="PDB" id="7QPM">
    <property type="method" value="X-ray"/>
    <property type="resolution" value="2.40 A"/>
    <property type="chains" value="A/B=432-764"/>
</dbReference>
<dbReference type="PDB" id="7QPQ">
    <property type="method" value="X-ray"/>
    <property type="resolution" value="2.20 A"/>
    <property type="chains" value="A/B=432-764"/>
</dbReference>
<dbReference type="PDB" id="7QPV">
    <property type="method" value="X-ray"/>
    <property type="resolution" value="2.30 A"/>
    <property type="chains" value="A/B=432-764"/>
</dbReference>
<dbReference type="PDB" id="7QQ4">
    <property type="method" value="X-ray"/>
    <property type="resolution" value="2.45 A"/>
    <property type="chains" value="A/B=432-764"/>
</dbReference>
<dbReference type="PDB" id="8DI4">
    <property type="method" value="X-ray"/>
    <property type="resolution" value="2.02 A"/>
    <property type="chains" value="A/B=439-779"/>
</dbReference>
<dbReference type="PDB" id="8XV3">
    <property type="method" value="X-ray"/>
    <property type="resolution" value="2.30 A"/>
    <property type="chains" value="A/B=715-1036"/>
</dbReference>
<dbReference type="PDB" id="9JA8">
    <property type="method" value="X-ray"/>
    <property type="resolution" value="2.40 A"/>
    <property type="chains" value="A/B=715-1036"/>
</dbReference>
<dbReference type="PDBsum" id="2OUN"/>
<dbReference type="PDBsum" id="2OUP"/>
<dbReference type="PDBsum" id="2OUQ"/>
<dbReference type="PDBsum" id="2OUR"/>
<dbReference type="PDBsum" id="2OUS"/>
<dbReference type="PDBsum" id="2OUU"/>
<dbReference type="PDBsum" id="2OUV"/>
<dbReference type="PDBsum" id="2OUY"/>
<dbReference type="PDBsum" id="2WEY"/>
<dbReference type="PDBsum" id="2Y0J"/>
<dbReference type="PDBsum" id="2ZMF"/>
<dbReference type="PDBsum" id="3SN7"/>
<dbReference type="PDBsum" id="3SNI"/>
<dbReference type="PDBsum" id="3SNL"/>
<dbReference type="PDBsum" id="3UI7"/>
<dbReference type="PDBsum" id="3UUO"/>
<dbReference type="PDBsum" id="3WI2"/>
<dbReference type="PDBsum" id="3WS8"/>
<dbReference type="PDBsum" id="3WS9"/>
<dbReference type="PDBsum" id="3WYK"/>
<dbReference type="PDBsum" id="3WYL"/>
<dbReference type="PDBsum" id="3WYM"/>
<dbReference type="PDBsum" id="4AEL"/>
<dbReference type="PDBsum" id="4AJD"/>
<dbReference type="PDBsum" id="4AJF"/>
<dbReference type="PDBsum" id="4AJG"/>
<dbReference type="PDBsum" id="4AJM"/>
<dbReference type="PDBsum" id="4BBX"/>
<dbReference type="PDBsum" id="4DDL"/>
<dbReference type="PDBsum" id="4DFF"/>
<dbReference type="PDBsum" id="4FCB"/>
<dbReference type="PDBsum" id="4FCD"/>
<dbReference type="PDBsum" id="4HEU"/>
<dbReference type="PDBsum" id="4HF4"/>
<dbReference type="PDBsum" id="4LKQ"/>
<dbReference type="PDBsum" id="4LLJ"/>
<dbReference type="PDBsum" id="4LLK"/>
<dbReference type="PDBsum" id="4LLP"/>
<dbReference type="PDBsum" id="4LLX"/>
<dbReference type="PDBsum" id="4LM0"/>
<dbReference type="PDBsum" id="4LM1"/>
<dbReference type="PDBsum" id="4LM2"/>
<dbReference type="PDBsum" id="4LM3"/>
<dbReference type="PDBsum" id="4LM4"/>
<dbReference type="PDBsum" id="4MRW"/>
<dbReference type="PDBsum" id="4MRZ"/>
<dbReference type="PDBsum" id="4MS0"/>
<dbReference type="PDBsum" id="4MSA"/>
<dbReference type="PDBsum" id="4MSC"/>
<dbReference type="PDBsum" id="4MSE"/>
<dbReference type="PDBsum" id="4MSH"/>
<dbReference type="PDBsum" id="4MSN"/>
<dbReference type="PDBsum" id="4MUW"/>
<dbReference type="PDBsum" id="4MVH"/>
<dbReference type="PDBsum" id="4P0N"/>
<dbReference type="PDBsum" id="4P1R"/>
<dbReference type="PDBsum" id="4PHW"/>
<dbReference type="PDBsum" id="4TPM"/>
<dbReference type="PDBsum" id="4TPP"/>
<dbReference type="PDBsum" id="4WN1"/>
<dbReference type="PDBsum" id="4XY2"/>
<dbReference type="PDBsum" id="4YQH"/>
<dbReference type="PDBsum" id="4YS7"/>
<dbReference type="PDBsum" id="4ZO5"/>
<dbReference type="PDBsum" id="5AXP"/>
<dbReference type="PDBsum" id="5AXQ"/>
<dbReference type="PDBsum" id="5B4K"/>
<dbReference type="PDBsum" id="5B4L"/>
<dbReference type="PDBsum" id="5C1W"/>
<dbReference type="PDBsum" id="5C28"/>
<dbReference type="PDBsum" id="5C29"/>
<dbReference type="PDBsum" id="5C2A"/>
<dbReference type="PDBsum" id="5C2E"/>
<dbReference type="PDBsum" id="5C2H"/>
<dbReference type="PDBsum" id="5DH4"/>
<dbReference type="PDBsum" id="5DH5"/>
<dbReference type="PDBsum" id="5EDE"/>
<dbReference type="PDBsum" id="5EDG"/>
<dbReference type="PDBsum" id="5EDH"/>
<dbReference type="PDBsum" id="5EDI"/>
<dbReference type="PDBsum" id="5I2R"/>
<dbReference type="PDBsum" id="5K9R"/>
<dbReference type="PDBsum" id="5SDU"/>
<dbReference type="PDBsum" id="5SDV"/>
<dbReference type="PDBsum" id="5SDW"/>
<dbReference type="PDBsum" id="5SDX"/>
<dbReference type="PDBsum" id="5SDY"/>
<dbReference type="PDBsum" id="5SDZ"/>
<dbReference type="PDBsum" id="5SE0"/>
<dbReference type="PDBsum" id="5SE1"/>
<dbReference type="PDBsum" id="5SE2"/>
<dbReference type="PDBsum" id="5SE3"/>
<dbReference type="PDBsum" id="5SE4"/>
<dbReference type="PDBsum" id="5SE5"/>
<dbReference type="PDBsum" id="5SE6"/>
<dbReference type="PDBsum" id="5SE7"/>
<dbReference type="PDBsum" id="5SE8"/>
<dbReference type="PDBsum" id="5SE9"/>
<dbReference type="PDBsum" id="5SEA"/>
<dbReference type="PDBsum" id="5SEB"/>
<dbReference type="PDBsum" id="5SEC"/>
<dbReference type="PDBsum" id="5SED"/>
<dbReference type="PDBsum" id="5SEE"/>
<dbReference type="PDBsum" id="5SEF"/>
<dbReference type="PDBsum" id="5SEG"/>
<dbReference type="PDBsum" id="5SEH"/>
<dbReference type="PDBsum" id="5SEI"/>
<dbReference type="PDBsum" id="5SEJ"/>
<dbReference type="PDBsum" id="5SEK"/>
<dbReference type="PDBsum" id="5SEL"/>
<dbReference type="PDBsum" id="5SEM"/>
<dbReference type="PDBsum" id="5SEN"/>
<dbReference type="PDBsum" id="5SEO"/>
<dbReference type="PDBsum" id="5SEP"/>
<dbReference type="PDBsum" id="5SEQ"/>
<dbReference type="PDBsum" id="5SER"/>
<dbReference type="PDBsum" id="5SES"/>
<dbReference type="PDBsum" id="5SET"/>
<dbReference type="PDBsum" id="5SEU"/>
<dbReference type="PDBsum" id="5SEV"/>
<dbReference type="PDBsum" id="5SEW"/>
<dbReference type="PDBsum" id="5SEX"/>
<dbReference type="PDBsum" id="5SEY"/>
<dbReference type="PDBsum" id="5SEZ"/>
<dbReference type="PDBsum" id="5SF0"/>
<dbReference type="PDBsum" id="5SF1"/>
<dbReference type="PDBsum" id="5SF2"/>
<dbReference type="PDBsum" id="5SF3"/>
<dbReference type="PDBsum" id="5SF4"/>
<dbReference type="PDBsum" id="5SF5"/>
<dbReference type="PDBsum" id="5SF6"/>
<dbReference type="PDBsum" id="5SF7"/>
<dbReference type="PDBsum" id="5SF8"/>
<dbReference type="PDBsum" id="5SF9"/>
<dbReference type="PDBsum" id="5SFA"/>
<dbReference type="PDBsum" id="5SFB"/>
<dbReference type="PDBsum" id="5SFC"/>
<dbReference type="PDBsum" id="5SFD"/>
<dbReference type="PDBsum" id="5SFE"/>
<dbReference type="PDBsum" id="5SFF"/>
<dbReference type="PDBsum" id="5SFG"/>
<dbReference type="PDBsum" id="5SFH"/>
<dbReference type="PDBsum" id="5SFI"/>
<dbReference type="PDBsum" id="5SFJ"/>
<dbReference type="PDBsum" id="5SFK"/>
<dbReference type="PDBsum" id="5SFL"/>
<dbReference type="PDBsum" id="5SFM"/>
<dbReference type="PDBsum" id="5SFN"/>
<dbReference type="PDBsum" id="5SFO"/>
<dbReference type="PDBsum" id="5SFP"/>
<dbReference type="PDBsum" id="5SFQ"/>
<dbReference type="PDBsum" id="5SFR"/>
<dbReference type="PDBsum" id="5SFS"/>
<dbReference type="PDBsum" id="5SFT"/>
<dbReference type="PDBsum" id="5SFU"/>
<dbReference type="PDBsum" id="5SFV"/>
<dbReference type="PDBsum" id="5SFW"/>
<dbReference type="PDBsum" id="5SFX"/>
<dbReference type="PDBsum" id="5SFY"/>
<dbReference type="PDBsum" id="5SFZ"/>
<dbReference type="PDBsum" id="5SG0"/>
<dbReference type="PDBsum" id="5SG1"/>
<dbReference type="PDBsum" id="5SG2"/>
<dbReference type="PDBsum" id="5SG3"/>
<dbReference type="PDBsum" id="5SG4"/>
<dbReference type="PDBsum" id="5SG5"/>
<dbReference type="PDBsum" id="5SG6"/>
<dbReference type="PDBsum" id="5SG7"/>
<dbReference type="PDBsum" id="5SG8"/>
<dbReference type="PDBsum" id="5SG9"/>
<dbReference type="PDBsum" id="5SGB"/>
<dbReference type="PDBsum" id="5SGC"/>
<dbReference type="PDBsum" id="5SGD"/>
<dbReference type="PDBsum" id="5SGE"/>
<dbReference type="PDBsum" id="5SGF"/>
<dbReference type="PDBsum" id="5SGG"/>
<dbReference type="PDBsum" id="5SGH"/>
<dbReference type="PDBsum" id="5SGI"/>
<dbReference type="PDBsum" id="5SGJ"/>
<dbReference type="PDBsum" id="5SGK"/>
<dbReference type="PDBsum" id="5SGL"/>
<dbReference type="PDBsum" id="5SGM"/>
<dbReference type="PDBsum" id="5SGN"/>
<dbReference type="PDBsum" id="5SGO"/>
<dbReference type="PDBsum" id="5SGP"/>
<dbReference type="PDBsum" id="5SGQ"/>
<dbReference type="PDBsum" id="5SGR"/>
<dbReference type="PDBsum" id="5SGS"/>
<dbReference type="PDBsum" id="5SGT"/>
<dbReference type="PDBsum" id="5SGU"/>
<dbReference type="PDBsum" id="5SGV"/>
<dbReference type="PDBsum" id="5SGW"/>
<dbReference type="PDBsum" id="5SGX"/>
<dbReference type="PDBsum" id="5SGY"/>
<dbReference type="PDBsum" id="5SGZ"/>
<dbReference type="PDBsum" id="5SH0"/>
<dbReference type="PDBsum" id="5SH1"/>
<dbReference type="PDBsum" id="5SH2"/>
<dbReference type="PDBsum" id="5SH3"/>
<dbReference type="PDBsum" id="5SH4"/>
<dbReference type="PDBsum" id="5SH5"/>
<dbReference type="PDBsum" id="5SH6"/>
<dbReference type="PDBsum" id="5SH7"/>
<dbReference type="PDBsum" id="5SH8"/>
<dbReference type="PDBsum" id="5SH9"/>
<dbReference type="PDBsum" id="5SHA"/>
<dbReference type="PDBsum" id="5SHB"/>
<dbReference type="PDBsum" id="5SHC"/>
<dbReference type="PDBsum" id="5SHD"/>
<dbReference type="PDBsum" id="5SHE"/>
<dbReference type="PDBsum" id="5SHF"/>
<dbReference type="PDBsum" id="5SHG"/>
<dbReference type="PDBsum" id="5SHH"/>
<dbReference type="PDBsum" id="5SHI"/>
<dbReference type="PDBsum" id="5SHJ"/>
<dbReference type="PDBsum" id="5SHK"/>
<dbReference type="PDBsum" id="5SHL"/>
<dbReference type="PDBsum" id="5SHM"/>
<dbReference type="PDBsum" id="5SHN"/>
<dbReference type="PDBsum" id="5SHO"/>
<dbReference type="PDBsum" id="5SHP"/>
<dbReference type="PDBsum" id="5SHQ"/>
<dbReference type="PDBsum" id="5SHR"/>
<dbReference type="PDBsum" id="5SHS"/>
<dbReference type="PDBsum" id="5SHT"/>
<dbReference type="PDBsum" id="5SHU"/>
<dbReference type="PDBsum" id="5SHV"/>
<dbReference type="PDBsum" id="5SHW"/>
<dbReference type="PDBsum" id="5SHX"/>
<dbReference type="PDBsum" id="5SHY"/>
<dbReference type="PDBsum" id="5SHZ"/>
<dbReference type="PDBsum" id="5SI0"/>
<dbReference type="PDBsum" id="5SI1"/>
<dbReference type="PDBsum" id="5SI2"/>
<dbReference type="PDBsum" id="5SI3"/>
<dbReference type="PDBsum" id="5SI4"/>
<dbReference type="PDBsum" id="5SI5"/>
<dbReference type="PDBsum" id="5SI6"/>
<dbReference type="PDBsum" id="5SI7"/>
<dbReference type="PDBsum" id="5SI8"/>
<dbReference type="PDBsum" id="5SI9"/>
<dbReference type="PDBsum" id="5SIA"/>
<dbReference type="PDBsum" id="5SIB"/>
<dbReference type="PDBsum" id="5SID"/>
<dbReference type="PDBsum" id="5SIE"/>
<dbReference type="PDBsum" id="5SIF"/>
<dbReference type="PDBsum" id="5SIG"/>
<dbReference type="PDBsum" id="5SIH"/>
<dbReference type="PDBsum" id="5SII"/>
<dbReference type="PDBsum" id="5SIJ"/>
<dbReference type="PDBsum" id="5SIK"/>
<dbReference type="PDBsum" id="5SIL"/>
<dbReference type="PDBsum" id="5SIM"/>
<dbReference type="PDBsum" id="5SIN"/>
<dbReference type="PDBsum" id="5SIO"/>
<dbReference type="PDBsum" id="5SIP"/>
<dbReference type="PDBsum" id="5SIQ"/>
<dbReference type="PDBsum" id="5SIR"/>
<dbReference type="PDBsum" id="5SIS"/>
<dbReference type="PDBsum" id="5SIT"/>
<dbReference type="PDBsum" id="5SIU"/>
<dbReference type="PDBsum" id="5SIV"/>
<dbReference type="PDBsum" id="5SIW"/>
<dbReference type="PDBsum" id="5SIX"/>
<dbReference type="PDBsum" id="5SIY"/>
<dbReference type="PDBsum" id="5SIZ"/>
<dbReference type="PDBsum" id="5SJ0"/>
<dbReference type="PDBsum" id="5SJ1"/>
<dbReference type="PDBsum" id="5SJ2"/>
<dbReference type="PDBsum" id="5SJ3"/>
<dbReference type="PDBsum" id="5SJ4"/>
<dbReference type="PDBsum" id="5SJ5"/>
<dbReference type="PDBsum" id="5SJ6"/>
<dbReference type="PDBsum" id="5SJ7"/>
<dbReference type="PDBsum" id="5SJ8"/>
<dbReference type="PDBsum" id="5SJ9"/>
<dbReference type="PDBsum" id="5SJA"/>
<dbReference type="PDBsum" id="5SJB"/>
<dbReference type="PDBsum" id="5SJC"/>
<dbReference type="PDBsum" id="5SJD"/>
<dbReference type="PDBsum" id="5SJE"/>
<dbReference type="PDBsum" id="5SJF"/>
<dbReference type="PDBsum" id="5SJG"/>
<dbReference type="PDBsum" id="5SJH"/>
<dbReference type="PDBsum" id="5SJI"/>
<dbReference type="PDBsum" id="5SJJ"/>
<dbReference type="PDBsum" id="5SJK"/>
<dbReference type="PDBsum" id="5SJL"/>
<dbReference type="PDBsum" id="5SJM"/>
<dbReference type="PDBsum" id="5SJN"/>
<dbReference type="PDBsum" id="5SJO"/>
<dbReference type="PDBsum" id="5SJP"/>
<dbReference type="PDBsum" id="5SJQ"/>
<dbReference type="PDBsum" id="5SJR"/>
<dbReference type="PDBsum" id="5SJS"/>
<dbReference type="PDBsum" id="5SJT"/>
<dbReference type="PDBsum" id="5SJU"/>
<dbReference type="PDBsum" id="5SJV"/>
<dbReference type="PDBsum" id="5SJW"/>
<dbReference type="PDBsum" id="5SJX"/>
<dbReference type="PDBsum" id="5SJY"/>
<dbReference type="PDBsum" id="5SJZ"/>
<dbReference type="PDBsum" id="5SK0"/>
<dbReference type="PDBsum" id="5SK1"/>
<dbReference type="PDBsum" id="5SK2"/>
<dbReference type="PDBsum" id="5SK3"/>
<dbReference type="PDBsum" id="5SK4"/>
<dbReference type="PDBsum" id="5SK5"/>
<dbReference type="PDBsum" id="5SK6"/>
<dbReference type="PDBsum" id="5SK7"/>
<dbReference type="PDBsum" id="5SK8"/>
<dbReference type="PDBsum" id="5SK9"/>
<dbReference type="PDBsum" id="5SKA"/>
<dbReference type="PDBsum" id="5SKB"/>
<dbReference type="PDBsum" id="5SKC"/>
<dbReference type="PDBsum" id="5SKD"/>
<dbReference type="PDBsum" id="5SKE"/>
<dbReference type="PDBsum" id="5SKF"/>
<dbReference type="PDBsum" id="5SKG"/>
<dbReference type="PDBsum" id="5SKH"/>
<dbReference type="PDBsum" id="5SKI"/>
<dbReference type="PDBsum" id="5SKJ"/>
<dbReference type="PDBsum" id="5SKK"/>
<dbReference type="PDBsum" id="5SKL"/>
<dbReference type="PDBsum" id="5SKM"/>
<dbReference type="PDBsum" id="5SKN"/>
<dbReference type="PDBsum" id="5SKO"/>
<dbReference type="PDBsum" id="5SKP"/>
<dbReference type="PDBsum" id="5SKQ"/>
<dbReference type="PDBsum" id="5SKR"/>
<dbReference type="PDBsum" id="5SKS"/>
<dbReference type="PDBsum" id="5SKT"/>
<dbReference type="PDBsum" id="5SKU"/>
<dbReference type="PDBsum" id="5SKV"/>
<dbReference type="PDBsum" id="5UWF"/>
<dbReference type="PDBsum" id="5XUI"/>
<dbReference type="PDBsum" id="5XUJ"/>
<dbReference type="PDBsum" id="5ZNL"/>
<dbReference type="PDBsum" id="6IJH"/>
<dbReference type="PDBsum" id="6IJI"/>
<dbReference type="PDBsum" id="6KDX"/>
<dbReference type="PDBsum" id="6KDZ"/>
<dbReference type="PDBsum" id="6KE0"/>
<dbReference type="PDBsum" id="6KO0"/>
<dbReference type="PDBsum" id="6KO1"/>
<dbReference type="PDBsum" id="6KZE"/>
<dbReference type="PDBsum" id="6MSA"/>
<dbReference type="PDBsum" id="6MSC"/>
<dbReference type="PDBsum" id="7BPI"/>
<dbReference type="PDBsum" id="7QPF"/>
<dbReference type="PDBsum" id="7QPM"/>
<dbReference type="PDBsum" id="7QPQ"/>
<dbReference type="PDBsum" id="7QPV"/>
<dbReference type="PDBsum" id="7QQ4"/>
<dbReference type="PDBsum" id="8DI4"/>
<dbReference type="PDBsum" id="8XV3"/>
<dbReference type="PDBsum" id="9JA8"/>
<dbReference type="SMR" id="Q9Y233"/>
<dbReference type="BioGRID" id="116057">
    <property type="interactions" value="8"/>
</dbReference>
<dbReference type="CORUM" id="Q9Y233"/>
<dbReference type="FunCoup" id="Q9Y233">
    <property type="interactions" value="942"/>
</dbReference>
<dbReference type="IntAct" id="Q9Y233">
    <property type="interactions" value="2"/>
</dbReference>
<dbReference type="STRING" id="9606.ENSP00000355847"/>
<dbReference type="BindingDB" id="Q9Y233"/>
<dbReference type="ChEMBL" id="CHEMBL4409"/>
<dbReference type="DrugBank" id="DB08384">
    <property type="generic name" value="2-({4-[4-(pyridin-4-ylmethyl)-1H-pyrazol-3-yl]phenoxy}methyl)quinoline"/>
</dbReference>
<dbReference type="DrugBank" id="DB08386">
    <property type="generic name" value="2-{[4-(4-pyridin-4-yl-1H-pyrazol-3-yl)phenoxy]methyl}quinoline"/>
</dbReference>
<dbReference type="DrugBank" id="DB08383">
    <property type="generic name" value="4,5-bis(4-methoxyphenyl)-2-thiophen-2-yl-1H-imidazole"/>
</dbReference>
<dbReference type="DrugBank" id="DB08389">
    <property type="generic name" value="6,7-DIMETHOXY-4-[(3R)-3-(2-NAPHTHYLOXY)PYRROLIDIN-1-YL]QUINAZOLINE"/>
</dbReference>
<dbReference type="DrugBank" id="DB14774">
    <property type="generic name" value="Balipodect"/>
</dbReference>
<dbReference type="DrugBank" id="DB00201">
    <property type="generic name" value="Caffeine"/>
</dbReference>
<dbReference type="DrugBank" id="DB00975">
    <property type="generic name" value="Dipyridamole"/>
</dbReference>
<dbReference type="DrugBank" id="DB08387">
    <property type="generic name" value="Mardepodect"/>
</dbReference>
<dbReference type="DrugBank" id="DB01113">
    <property type="generic name" value="Papaverine"/>
</dbReference>
<dbReference type="DrugBank" id="DB08391">
    <property type="generic name" value="PQ-10"/>
</dbReference>
<dbReference type="DrugBank" id="DB08811">
    <property type="generic name" value="Tofisopam"/>
</dbReference>
<dbReference type="DrugBank" id="DB09283">
    <property type="generic name" value="Trapidil"/>
</dbReference>
<dbReference type="DrugBank" id="DB08814">
    <property type="generic name" value="Triflusal"/>
</dbReference>
<dbReference type="DrugCentral" id="Q9Y233"/>
<dbReference type="GuidetoPHARMACOLOGY" id="1310"/>
<dbReference type="GlyGen" id="Q9Y233">
    <property type="glycosylation" value="2 sites, 1 O-linked glycan (1 site)"/>
</dbReference>
<dbReference type="iPTMnet" id="Q9Y233"/>
<dbReference type="PhosphoSitePlus" id="Q9Y233"/>
<dbReference type="SwissPalm" id="Q9Y233"/>
<dbReference type="BioMuta" id="PDE10A"/>
<dbReference type="DMDM" id="7993747"/>
<dbReference type="jPOST" id="Q9Y233"/>
<dbReference type="MassIVE" id="Q9Y233"/>
<dbReference type="PaxDb" id="9606-ENSP00000438284"/>
<dbReference type="PeptideAtlas" id="Q9Y233"/>
<dbReference type="ProteomicsDB" id="85625">
    <molecule id="Q9Y233-1"/>
</dbReference>
<dbReference type="ProteomicsDB" id="85626">
    <molecule id="Q9Y233-2"/>
</dbReference>
<dbReference type="Pumba" id="Q9Y233"/>
<dbReference type="Antibodypedia" id="33512">
    <property type="antibodies" value="270 antibodies from 27 providers"/>
</dbReference>
<dbReference type="DNASU" id="10846"/>
<dbReference type="Ensembl" id="ENST00000539869.4">
    <molecule id="Q9Y233-3"/>
    <property type="protein sequence ID" value="ENSP00000438284.3"/>
    <property type="gene ID" value="ENSG00000112541.19"/>
</dbReference>
<dbReference type="GeneID" id="10846"/>
<dbReference type="KEGG" id="hsa:10846"/>
<dbReference type="MANE-Select" id="ENST00000539869.4">
    <property type="protein sequence ID" value="ENSP00000438284.3"/>
    <property type="RefSeq nucleotide sequence ID" value="NM_001385079.1"/>
    <property type="RefSeq protein sequence ID" value="NP_001372008.1"/>
</dbReference>
<dbReference type="UCSC" id="uc003quo.4">
    <molecule id="Q9Y233-3"/>
    <property type="organism name" value="human"/>
</dbReference>
<dbReference type="AGR" id="HGNC:8772"/>
<dbReference type="CTD" id="10846"/>
<dbReference type="DisGeNET" id="10846"/>
<dbReference type="GeneCards" id="PDE10A"/>
<dbReference type="HGNC" id="HGNC:8772">
    <property type="gene designation" value="PDE10A"/>
</dbReference>
<dbReference type="HPA" id="ENSG00000112541">
    <property type="expression patterns" value="Tissue enriched (brain)"/>
</dbReference>
<dbReference type="MalaCards" id="PDE10A"/>
<dbReference type="MIM" id="610652">
    <property type="type" value="gene"/>
</dbReference>
<dbReference type="MIM" id="616921">
    <property type="type" value="phenotype"/>
</dbReference>
<dbReference type="MIM" id="616922">
    <property type="type" value="phenotype"/>
</dbReference>
<dbReference type="neXtProt" id="NX_Q9Y233"/>
<dbReference type="OpenTargets" id="ENSG00000112541"/>
<dbReference type="Orphanet" id="494541">
    <property type="disease" value="Childhood-onset benign chorea with striatal involvement"/>
</dbReference>
<dbReference type="Orphanet" id="494526">
    <property type="disease" value="Infantile-onset generalized dyskinesia with orofacial involvement"/>
</dbReference>
<dbReference type="PharmGKB" id="PA33120"/>
<dbReference type="VEuPathDB" id="HostDB:ENSG00000112541"/>
<dbReference type="eggNOG" id="KOG3689">
    <property type="taxonomic scope" value="Eukaryota"/>
</dbReference>
<dbReference type="GeneTree" id="ENSGT00940000156543"/>
<dbReference type="HOGENOM" id="CLU_006980_1_0_1"/>
<dbReference type="InParanoid" id="Q9Y233"/>
<dbReference type="OrthoDB" id="546632at2759"/>
<dbReference type="PAN-GO" id="Q9Y233">
    <property type="GO annotations" value="3 GO annotations based on evolutionary models"/>
</dbReference>
<dbReference type="PhylomeDB" id="Q9Y233"/>
<dbReference type="TreeFam" id="TF316499"/>
<dbReference type="BRENDA" id="3.1.4.17">
    <property type="organism ID" value="2681"/>
</dbReference>
<dbReference type="PathwayCommons" id="Q9Y233"/>
<dbReference type="Reactome" id="R-HSA-418457">
    <property type="pathway name" value="cGMP effects"/>
</dbReference>
<dbReference type="Reactome" id="R-HSA-418555">
    <property type="pathway name" value="G alpha (s) signalling events"/>
</dbReference>
<dbReference type="SABIO-RK" id="Q9Y233"/>
<dbReference type="SignaLink" id="Q9Y233"/>
<dbReference type="SIGNOR" id="Q9Y233"/>
<dbReference type="UniPathway" id="UPA00762">
    <property type="reaction ID" value="UER00747"/>
</dbReference>
<dbReference type="UniPathway" id="UPA00763">
    <property type="reaction ID" value="UER00748"/>
</dbReference>
<dbReference type="BioGRID-ORCS" id="10846">
    <property type="hits" value="7 hits in 1161 CRISPR screens"/>
</dbReference>
<dbReference type="ChiTaRS" id="PDE10A">
    <property type="organism name" value="human"/>
</dbReference>
<dbReference type="EvolutionaryTrace" id="Q9Y233"/>
<dbReference type="GeneWiki" id="PDE10A"/>
<dbReference type="GenomeRNAi" id="10846"/>
<dbReference type="Pharos" id="Q9Y233">
    <property type="development level" value="Tclin"/>
</dbReference>
<dbReference type="PRO" id="PR:Q9Y233"/>
<dbReference type="Proteomes" id="UP000005640">
    <property type="component" value="Chromosome 6"/>
</dbReference>
<dbReference type="RNAct" id="Q9Y233">
    <property type="molecule type" value="protein"/>
</dbReference>
<dbReference type="Bgee" id="ENSG00000112541">
    <property type="expression patterns" value="Expressed in adrenal tissue and 144 other cell types or tissues"/>
</dbReference>
<dbReference type="ExpressionAtlas" id="Q9Y233">
    <property type="expression patterns" value="baseline and differential"/>
</dbReference>
<dbReference type="GO" id="GO:0005829">
    <property type="term" value="C:cytosol"/>
    <property type="evidence" value="ECO:0000304"/>
    <property type="project" value="Reactome"/>
</dbReference>
<dbReference type="GO" id="GO:0098978">
    <property type="term" value="C:glutamatergic synapse"/>
    <property type="evidence" value="ECO:0007669"/>
    <property type="project" value="Ensembl"/>
</dbReference>
<dbReference type="GO" id="GO:0004118">
    <property type="term" value="F:3',5'-cGMP-stimulated cyclic-nucleotide phosphodiesterase activity"/>
    <property type="evidence" value="ECO:0000314"/>
    <property type="project" value="UniProtKB"/>
</dbReference>
<dbReference type="GO" id="GO:0004115">
    <property type="term" value="F:3',5'-cyclic-AMP phosphodiesterase activity"/>
    <property type="evidence" value="ECO:0000318"/>
    <property type="project" value="GO_Central"/>
</dbReference>
<dbReference type="GO" id="GO:0047555">
    <property type="term" value="F:3',5'-cyclic-GMP phosphodiesterase activity"/>
    <property type="evidence" value="ECO:0000318"/>
    <property type="project" value="GO_Central"/>
</dbReference>
<dbReference type="GO" id="GO:0004114">
    <property type="term" value="F:3',5'-cyclic-nucleotide phosphodiesterase activity"/>
    <property type="evidence" value="ECO:0000304"/>
    <property type="project" value="ProtInc"/>
</dbReference>
<dbReference type="GO" id="GO:0030552">
    <property type="term" value="F:cAMP binding"/>
    <property type="evidence" value="ECO:0000314"/>
    <property type="project" value="UniProtKB"/>
</dbReference>
<dbReference type="GO" id="GO:0030553">
    <property type="term" value="F:cGMP binding"/>
    <property type="evidence" value="ECO:0000303"/>
    <property type="project" value="UniProtKB"/>
</dbReference>
<dbReference type="GO" id="GO:0046872">
    <property type="term" value="F:metal ion binding"/>
    <property type="evidence" value="ECO:0007669"/>
    <property type="project" value="UniProtKB-KW"/>
</dbReference>
<dbReference type="GO" id="GO:0006198">
    <property type="term" value="P:cAMP catabolic process"/>
    <property type="evidence" value="ECO:0007669"/>
    <property type="project" value="UniProtKB-UniPathway"/>
</dbReference>
<dbReference type="GO" id="GO:0019933">
    <property type="term" value="P:cAMP-mediated signaling"/>
    <property type="evidence" value="ECO:0000318"/>
    <property type="project" value="GO_Central"/>
</dbReference>
<dbReference type="GO" id="GO:0046069">
    <property type="term" value="P:cGMP catabolic process"/>
    <property type="evidence" value="ECO:0007669"/>
    <property type="project" value="UniProtKB-UniPathway"/>
</dbReference>
<dbReference type="GO" id="GO:0010754">
    <property type="term" value="P:negative regulation of cGMP-mediated signaling"/>
    <property type="evidence" value="ECO:0000318"/>
    <property type="project" value="GO_Central"/>
</dbReference>
<dbReference type="GO" id="GO:0106070">
    <property type="term" value="P:regulation of adenylate cyclase-activating G protein-coupled receptor signaling pathway"/>
    <property type="evidence" value="ECO:0007669"/>
    <property type="project" value="Ensembl"/>
</dbReference>
<dbReference type="GO" id="GO:0141161">
    <property type="term" value="P:regulation of cAMP/PKA signal transduction"/>
    <property type="evidence" value="ECO:0007669"/>
    <property type="project" value="Ensembl"/>
</dbReference>
<dbReference type="CDD" id="cd00077">
    <property type="entry name" value="HDc"/>
    <property type="match status" value="1"/>
</dbReference>
<dbReference type="FunFam" id="3.30.450.40:FF:000005">
    <property type="entry name" value="Phosphodiesterase"/>
    <property type="match status" value="1"/>
</dbReference>
<dbReference type="FunFam" id="3.30.450.40:FF:000011">
    <property type="entry name" value="Phosphodiesterase"/>
    <property type="match status" value="1"/>
</dbReference>
<dbReference type="FunFam" id="1.10.1300.10:FF:000007">
    <property type="entry name" value="Phosphodiesterase 10A"/>
    <property type="match status" value="1"/>
</dbReference>
<dbReference type="Gene3D" id="3.30.450.40">
    <property type="match status" value="2"/>
</dbReference>
<dbReference type="Gene3D" id="1.10.1300.10">
    <property type="entry name" value="3'5'-cyclic nucleotide phosphodiesterase, catalytic domain"/>
    <property type="match status" value="1"/>
</dbReference>
<dbReference type="InterPro" id="IPR003018">
    <property type="entry name" value="GAF"/>
</dbReference>
<dbReference type="InterPro" id="IPR029016">
    <property type="entry name" value="GAF-like_dom_sf"/>
</dbReference>
<dbReference type="InterPro" id="IPR003607">
    <property type="entry name" value="HD/PDEase_dom"/>
</dbReference>
<dbReference type="InterPro" id="IPR023088">
    <property type="entry name" value="PDEase"/>
</dbReference>
<dbReference type="InterPro" id="IPR002073">
    <property type="entry name" value="PDEase_catalytic_dom"/>
</dbReference>
<dbReference type="InterPro" id="IPR036971">
    <property type="entry name" value="PDEase_catalytic_dom_sf"/>
</dbReference>
<dbReference type="InterPro" id="IPR023174">
    <property type="entry name" value="PDEase_CS"/>
</dbReference>
<dbReference type="PANTHER" id="PTHR11347">
    <property type="entry name" value="CYCLIC NUCLEOTIDE PHOSPHODIESTERASE"/>
    <property type="match status" value="1"/>
</dbReference>
<dbReference type="Pfam" id="PF01590">
    <property type="entry name" value="GAF"/>
    <property type="match status" value="2"/>
</dbReference>
<dbReference type="Pfam" id="PF00233">
    <property type="entry name" value="PDEase_I"/>
    <property type="match status" value="1"/>
</dbReference>
<dbReference type="PRINTS" id="PR00387">
    <property type="entry name" value="PDIESTERASE1"/>
</dbReference>
<dbReference type="SMART" id="SM00065">
    <property type="entry name" value="GAF"/>
    <property type="match status" value="2"/>
</dbReference>
<dbReference type="SMART" id="SM00471">
    <property type="entry name" value="HDc"/>
    <property type="match status" value="1"/>
</dbReference>
<dbReference type="SUPFAM" id="SSF55781">
    <property type="entry name" value="GAF domain-like"/>
    <property type="match status" value="2"/>
</dbReference>
<dbReference type="SUPFAM" id="SSF109604">
    <property type="entry name" value="HD-domain/PDEase-like"/>
    <property type="match status" value="1"/>
</dbReference>
<dbReference type="PROSITE" id="PS00126">
    <property type="entry name" value="PDEASE_I_1"/>
    <property type="match status" value="1"/>
</dbReference>
<dbReference type="PROSITE" id="PS51845">
    <property type="entry name" value="PDEASE_I_2"/>
    <property type="match status" value="1"/>
</dbReference>
<evidence type="ECO:0000250" key="1">
    <source>
        <dbReference type="UniProtKB" id="O76083"/>
    </source>
</evidence>
<evidence type="ECO:0000255" key="2">
    <source>
        <dbReference type="PROSITE-ProRule" id="PRU01192"/>
    </source>
</evidence>
<evidence type="ECO:0000256" key="3">
    <source>
        <dbReference type="SAM" id="MobiDB-lite"/>
    </source>
</evidence>
<evidence type="ECO:0000269" key="4">
    <source>
    </source>
</evidence>
<evidence type="ECO:0000269" key="5">
    <source>
    </source>
</evidence>
<evidence type="ECO:0000269" key="6">
    <source>
    </source>
</evidence>
<evidence type="ECO:0000269" key="7">
    <source>
    </source>
</evidence>
<evidence type="ECO:0000269" key="8">
    <source>
    </source>
</evidence>
<evidence type="ECO:0000269" key="9">
    <source>
    </source>
</evidence>
<evidence type="ECO:0000269" key="10">
    <source>
    </source>
</evidence>
<evidence type="ECO:0000269" key="11">
    <source>
    </source>
</evidence>
<evidence type="ECO:0000305" key="12"/>
<evidence type="ECO:0007744" key="13">
    <source>
        <dbReference type="PDB" id="2ZMF"/>
    </source>
</evidence>
<evidence type="ECO:0007829" key="14">
    <source>
        <dbReference type="PDB" id="2OUR"/>
    </source>
</evidence>
<evidence type="ECO:0007829" key="15">
    <source>
        <dbReference type="PDB" id="2OUS"/>
    </source>
</evidence>
<evidence type="ECO:0007829" key="16">
    <source>
        <dbReference type="PDB" id="2ZMF"/>
    </source>
</evidence>
<evidence type="ECO:0007829" key="17">
    <source>
        <dbReference type="PDB" id="3SN7"/>
    </source>
</evidence>
<evidence type="ECO:0007829" key="18">
    <source>
        <dbReference type="PDB" id="3SNI"/>
    </source>
</evidence>
<evidence type="ECO:0007829" key="19">
    <source>
        <dbReference type="PDB" id="3UI7"/>
    </source>
</evidence>
<evidence type="ECO:0007829" key="20">
    <source>
        <dbReference type="PDB" id="3WI2"/>
    </source>
</evidence>
<evidence type="ECO:0007829" key="21">
    <source>
        <dbReference type="PDB" id="5C28"/>
    </source>
</evidence>
<feature type="chain" id="PRO_0000198843" description="cAMP and cAMP-inhibited cGMP 3',5'-cyclic phosphodiesterase 10A">
    <location>
        <begin position="1"/>
        <end position="1055"/>
    </location>
</feature>
<feature type="domain" description="GAF 1">
    <location>
        <begin position="367"/>
        <end position="510"/>
    </location>
</feature>
<feature type="domain" description="GAF 2">
    <location>
        <begin position="542"/>
        <end position="688"/>
    </location>
</feature>
<feature type="domain" description="PDEase" evidence="2">
    <location>
        <begin position="718"/>
        <end position="1035"/>
    </location>
</feature>
<feature type="region of interest" description="Disordered" evidence="3">
    <location>
        <begin position="1"/>
        <end position="90"/>
    </location>
</feature>
<feature type="region of interest" description="Disordered" evidence="3">
    <location>
        <begin position="151"/>
        <end position="193"/>
    </location>
</feature>
<feature type="region of interest" description="Disordered" evidence="3">
    <location>
        <begin position="205"/>
        <end position="250"/>
    </location>
</feature>
<feature type="compositionally biased region" description="Gly residues" evidence="3">
    <location>
        <begin position="79"/>
        <end position="90"/>
    </location>
</feature>
<feature type="compositionally biased region" description="Gly residues" evidence="3">
    <location>
        <begin position="154"/>
        <end position="168"/>
    </location>
</feature>
<feature type="compositionally biased region" description="Low complexity" evidence="3">
    <location>
        <begin position="220"/>
        <end position="231"/>
    </location>
</feature>
<feature type="compositionally biased region" description="Gly residues" evidence="3">
    <location>
        <begin position="232"/>
        <end position="243"/>
    </location>
</feature>
<feature type="active site" description="Proton donor" evidence="1">
    <location>
        <position position="791"/>
    </location>
</feature>
<feature type="binding site" evidence="9 13">
    <location>
        <begin position="562"/>
        <end position="563"/>
    </location>
    <ligand>
        <name>3',5'-cyclic AMP</name>
        <dbReference type="ChEBI" id="CHEBI:58165"/>
    </ligand>
</feature>
<feature type="binding site" evidence="9 13">
    <location>
        <begin position="606"/>
        <end position="607"/>
    </location>
    <ligand>
        <name>3',5'-cyclic AMP</name>
        <dbReference type="ChEBI" id="CHEBI:58165"/>
    </ligand>
</feature>
<feature type="binding site" evidence="9 13">
    <location>
        <position position="640"/>
    </location>
    <ligand>
        <name>3',5'-cyclic AMP</name>
        <dbReference type="ChEBI" id="CHEBI:58165"/>
    </ligand>
</feature>
<feature type="binding site" evidence="9 13">
    <location>
        <position position="659"/>
    </location>
    <ligand>
        <name>3',5'-cyclic AMP</name>
        <dbReference type="ChEBI" id="CHEBI:58165"/>
    </ligand>
</feature>
<feature type="binding site" evidence="8">
    <location>
        <position position="791"/>
    </location>
    <ligand>
        <name>3',5'-cyclic AMP</name>
        <dbReference type="ChEBI" id="CHEBI:58165"/>
    </ligand>
</feature>
<feature type="binding site" evidence="8">
    <location>
        <position position="791"/>
    </location>
    <ligand>
        <name>3',5'-cyclic GMP</name>
        <dbReference type="ChEBI" id="CHEBI:57746"/>
    </ligand>
</feature>
<feature type="binding site" evidence="8">
    <location>
        <position position="795"/>
    </location>
    <ligand>
        <name>a divalent metal cation</name>
        <dbReference type="ChEBI" id="CHEBI:60240"/>
        <label>1</label>
    </ligand>
</feature>
<feature type="binding site" evidence="8">
    <location>
        <position position="829"/>
    </location>
    <ligand>
        <name>a divalent metal cation</name>
        <dbReference type="ChEBI" id="CHEBI:60240"/>
        <label>1</label>
    </ligand>
</feature>
<feature type="binding site" evidence="8">
    <location>
        <position position="830"/>
    </location>
    <ligand>
        <name>a divalent metal cation</name>
        <dbReference type="ChEBI" id="CHEBI:60240"/>
        <label>1</label>
    </ligand>
</feature>
<feature type="binding site" evidence="8">
    <location>
        <position position="830"/>
    </location>
    <ligand>
        <name>a divalent metal cation</name>
        <dbReference type="ChEBI" id="CHEBI:60240"/>
        <label>2</label>
    </ligand>
</feature>
<feature type="binding site" evidence="8">
    <location>
        <position position="940"/>
    </location>
    <ligand>
        <name>a divalent metal cation</name>
        <dbReference type="ChEBI" id="CHEBI:60240"/>
        <label>1</label>
    </ligand>
</feature>
<feature type="binding site" evidence="8">
    <location>
        <position position="992"/>
    </location>
    <ligand>
        <name>3',5'-cyclic AMP</name>
        <dbReference type="ChEBI" id="CHEBI:58165"/>
    </ligand>
</feature>
<feature type="binding site" evidence="8">
    <location>
        <position position="992"/>
    </location>
    <ligand>
        <name>3',5'-cyclic GMP</name>
        <dbReference type="ChEBI" id="CHEBI:57746"/>
    </ligand>
</feature>
<feature type="modified residue" description="Phosphothreonine" evidence="6">
    <location>
        <position position="282"/>
    </location>
</feature>
<feature type="splice variant" id="VSP_062215" description="In isoform PDE10A1.">
    <original>MASLEEPLAPRPQGPLPAAGDEPGCGPGKLRPEPRLSAAGGGSAAGPGPAPEWPGRGRAERAAPPRPPLSSAGRPSPAGGPGALSARGGGCGWVAARAPLALAFSSRVPSSSPSFFYFWPPPPPPPPSFLPSSSAFHLPVRLPGREGAAAAAAAGGGGDAGGGGGGGQEAAPLSVPTSSSHRGGGGSGGGRRRLFLSPALQGLLLPARAGPRPPPPPRLPLGQAARRAGSPGFPGAGPGGGGQTPRRPQGASFALAAAAALLFGSDMEDGPSNNASCFRRLTECFLSPS</original>
    <variation>MRIEERKSQHLTG</variation>
    <location>
        <begin position="1"/>
        <end position="289"/>
    </location>
</feature>
<feature type="splice variant" id="VSP_062216" description="In isoform PDE10A2.">
    <location>
        <begin position="1"/>
        <end position="266"/>
    </location>
</feature>
<feature type="sequence variant" id="VAR_076798" description="In IOLOD; decreased protein abundance; dbSNP:rs778899140." evidence="10">
    <original>Y</original>
    <variation>C</variation>
    <location>
        <position position="373"/>
    </location>
</feature>
<feature type="sequence variant" id="VAR_076799" description="In IOLOD; decreased protein abundance; dbSNP:rs875989839." evidence="10">
    <original>A</original>
    <variation>P</variation>
    <location>
        <position position="382"/>
    </location>
</feature>
<feature type="sequence variant" id="VAR_076800" description="In ADSD2; no effect on basal 3',5'-cyclic-nucleotide phosphodiesterase activity; the mutation severely disrupts the stimulatory effect on the enzyme activity mediated by cAMP binding; dbSNP:rs875989841." evidence="11">
    <original>F</original>
    <variation>L</variation>
    <location>
        <position position="566"/>
    </location>
</feature>
<feature type="sequence variant" id="VAR_008797">
    <original>L</original>
    <variation>P</variation>
    <location>
        <position position="579"/>
    </location>
</feature>
<feature type="sequence variant" id="VAR_076801" description="In ADSD2; no effect on basal 3',5'-cyclic-nucleotide phosphodiesterase activity; the mutation severely disrupts the stimulatory effect on the enzyme activity mediated by cAMP binding; dbSNP:rs875989840." evidence="11">
    <original>F</original>
    <variation>L</variation>
    <location>
        <position position="600"/>
    </location>
</feature>
<feature type="sequence variant" id="VAR_047822" description="In dbSNP:rs2224252.">
    <original>R</original>
    <variation>K</variation>
    <location>
        <position position="982"/>
    </location>
</feature>
<feature type="sequence variant" id="VAR_047823" description="In dbSNP:rs2860112.">
    <original>D</original>
    <variation>N</variation>
    <location>
        <position position="983"/>
    </location>
</feature>
<feature type="mutagenesis site" description="Loss of activity and of zinc binding." evidence="8">
    <original>D</original>
    <variation>A</variation>
    <location>
        <position position="830"/>
    </location>
</feature>
<feature type="mutagenesis site" description="Reduces activity 1000-fold." evidence="8">
    <original>D</original>
    <variation>N</variation>
    <location>
        <position position="830"/>
    </location>
</feature>
<feature type="sequence conflict" description="In Ref. 4; CAG38804." evidence="12" ref="4">
    <original>G</original>
    <variation>S</variation>
    <location>
        <position position="933"/>
    </location>
</feature>
<feature type="helix" evidence="16">
    <location>
        <begin position="523"/>
        <end position="538"/>
    </location>
</feature>
<feature type="helix" evidence="16">
    <location>
        <begin position="543"/>
        <end position="558"/>
    </location>
</feature>
<feature type="strand" evidence="16">
    <location>
        <begin position="560"/>
        <end position="569"/>
    </location>
</feature>
<feature type="turn" evidence="16">
    <location>
        <begin position="570"/>
        <end position="573"/>
    </location>
</feature>
<feature type="strand" evidence="16">
    <location>
        <begin position="574"/>
        <end position="580"/>
    </location>
</feature>
<feature type="strand" evidence="16">
    <location>
        <begin position="599"/>
        <end position="601"/>
    </location>
</feature>
<feature type="helix" evidence="16">
    <location>
        <begin position="605"/>
        <end position="613"/>
    </location>
</feature>
<feature type="strand" evidence="16">
    <location>
        <begin position="617"/>
        <end position="620"/>
    </location>
</feature>
<feature type="helix" evidence="16">
    <location>
        <begin position="622"/>
        <end position="624"/>
    </location>
</feature>
<feature type="helix" evidence="16">
    <location>
        <begin position="631"/>
        <end position="636"/>
    </location>
</feature>
<feature type="strand" evidence="16">
    <location>
        <begin position="643"/>
        <end position="650"/>
    </location>
</feature>
<feature type="strand" evidence="16">
    <location>
        <begin position="653"/>
        <end position="663"/>
    </location>
</feature>
<feature type="strand" evidence="16">
    <location>
        <begin position="666"/>
        <end position="668"/>
    </location>
</feature>
<feature type="helix" evidence="16">
    <location>
        <begin position="671"/>
        <end position="695"/>
    </location>
</feature>
<feature type="helix" evidence="14">
    <location>
        <begin position="719"/>
        <end position="725"/>
    </location>
</feature>
<feature type="helix" evidence="14">
    <location>
        <begin position="732"/>
        <end position="737"/>
    </location>
</feature>
<feature type="strand" evidence="19">
    <location>
        <begin position="740"/>
        <end position="742"/>
    </location>
</feature>
<feature type="helix" evidence="14">
    <location>
        <begin position="746"/>
        <end position="751"/>
    </location>
</feature>
<feature type="helix" evidence="14">
    <location>
        <begin position="752"/>
        <end position="764"/>
    </location>
</feature>
<feature type="turn" evidence="18">
    <location>
        <begin position="766"/>
        <end position="768"/>
    </location>
</feature>
<feature type="helix" evidence="14">
    <location>
        <begin position="771"/>
        <end position="783"/>
    </location>
</feature>
<feature type="strand" evidence="14">
    <location>
        <begin position="789"/>
        <end position="792"/>
    </location>
</feature>
<feature type="helix" evidence="14">
    <location>
        <begin position="793"/>
        <end position="808"/>
    </location>
</feature>
<feature type="helix" evidence="14">
    <location>
        <begin position="809"/>
        <end position="813"/>
    </location>
</feature>
<feature type="helix" evidence="14">
    <location>
        <begin position="816"/>
        <end position="828"/>
    </location>
</feature>
<feature type="turn" evidence="14">
    <location>
        <begin position="829"/>
        <end position="832"/>
    </location>
</feature>
<feature type="helix" evidence="14">
    <location>
        <begin position="838"/>
        <end position="843"/>
    </location>
</feature>
<feature type="helix" evidence="14">
    <location>
        <begin position="847"/>
        <end position="851"/>
    </location>
</feature>
<feature type="strand" evidence="15">
    <location>
        <begin position="853"/>
        <end position="855"/>
    </location>
</feature>
<feature type="helix" evidence="14">
    <location>
        <begin position="856"/>
        <end position="869"/>
    </location>
</feature>
<feature type="turn" evidence="17">
    <location>
        <begin position="872"/>
        <end position="874"/>
    </location>
</feature>
<feature type="turn" evidence="14">
    <location>
        <begin position="876"/>
        <end position="879"/>
    </location>
</feature>
<feature type="helix" evidence="14">
    <location>
        <begin position="882"/>
        <end position="898"/>
    </location>
</feature>
<feature type="helix" evidence="14">
    <location>
        <begin position="901"/>
        <end position="916"/>
    </location>
</feature>
<feature type="strand" evidence="20">
    <location>
        <begin position="922"/>
        <end position="924"/>
    </location>
</feature>
<feature type="helix" evidence="14">
    <location>
        <begin position="925"/>
        <end position="940"/>
    </location>
</feature>
<feature type="helix" evidence="14">
    <location>
        <begin position="942"/>
        <end position="945"/>
    </location>
</feature>
<feature type="helix" evidence="14">
    <location>
        <begin position="948"/>
        <end position="971"/>
    </location>
</feature>
<feature type="helix" evidence="14">
    <location>
        <begin position="978"/>
        <end position="980"/>
    </location>
</feature>
<feature type="helix" evidence="14">
    <location>
        <begin position="982"/>
        <end position="987"/>
    </location>
</feature>
<feature type="helix" evidence="14">
    <location>
        <begin position="988"/>
        <end position="998"/>
    </location>
</feature>
<feature type="helix" evidence="14">
    <location>
        <begin position="1000"/>
        <end position="1010"/>
    </location>
</feature>
<feature type="helix" evidence="14">
    <location>
        <begin position="1012"/>
        <end position="1014"/>
    </location>
</feature>
<feature type="helix" evidence="14">
    <location>
        <begin position="1015"/>
        <end position="1033"/>
    </location>
</feature>
<feature type="helix" evidence="21">
    <location>
        <begin position="1038"/>
        <end position="1041"/>
    </location>
</feature>
<comment type="function">
    <text evidence="4 5 7 8 11">Plays a role in signal transduction by regulating the intracellular concentration of cyclic nucleotides (PubMed:10373451, PubMed:10393245, PubMed:16330539, PubMed:17389385, PubMed:27058447). Can hydrolyze both cAMP and cGMP, but has higher affinity for cAMP and is more efficient with cAMP as substrate (PubMed:10373451, PubMed:10393245, PubMed:17389385, PubMed:27058447). May play a critical role in regulating cAMP and cGMP levels in the striatum, a region of the brain that contributes to the control of movement and cognition (PubMed:27058447).</text>
</comment>
<comment type="catalytic activity">
    <reaction evidence="4 5 8 11">
        <text>a nucleoside 3',5'-cyclic phosphate + H2O = a nucleoside 5'-phosphate + H(+)</text>
        <dbReference type="Rhea" id="RHEA:14653"/>
        <dbReference type="ChEBI" id="CHEBI:15377"/>
        <dbReference type="ChEBI" id="CHEBI:15378"/>
        <dbReference type="ChEBI" id="CHEBI:57867"/>
        <dbReference type="ChEBI" id="CHEBI:58464"/>
        <dbReference type="EC" id="3.1.4.17"/>
    </reaction>
</comment>
<comment type="catalytic activity">
    <reaction evidence="4 5 7 8 11">
        <text>3',5'-cyclic AMP + H2O = AMP + H(+)</text>
        <dbReference type="Rhea" id="RHEA:25277"/>
        <dbReference type="ChEBI" id="CHEBI:15377"/>
        <dbReference type="ChEBI" id="CHEBI:15378"/>
        <dbReference type="ChEBI" id="CHEBI:58165"/>
        <dbReference type="ChEBI" id="CHEBI:456215"/>
    </reaction>
</comment>
<comment type="catalytic activity">
    <reaction evidence="4 5 8 11">
        <text>3',5'-cyclic GMP + H2O = GMP + H(+)</text>
        <dbReference type="Rhea" id="RHEA:16957"/>
        <dbReference type="ChEBI" id="CHEBI:15377"/>
        <dbReference type="ChEBI" id="CHEBI:15378"/>
        <dbReference type="ChEBI" id="CHEBI:57746"/>
        <dbReference type="ChEBI" id="CHEBI:58115"/>
    </reaction>
</comment>
<comment type="cofactor">
    <cofactor evidence="8">
        <name>a divalent metal cation</name>
        <dbReference type="ChEBI" id="CHEBI:60240"/>
    </cofactor>
    <text evidence="8">Binds 2 divalent metal cations per subunit. Site 1 may preferentially bind zinc ions, while site 2 has a preference for magnesium and/or manganese ions.</text>
</comment>
<comment type="activity regulation">
    <text evidence="7">Inhibited by dipyridamole and moderately by IBMX. cGMP acts as an allosteric activator.</text>
</comment>
<comment type="biophysicochemical properties">
    <kinetics>
        <KM evidence="4">0.26 uM for cAMP</KM>
        <KM evidence="4">7.2 uM for cGMP</KM>
        <KM evidence="8">56 nM for cAMP</KM>
        <KM evidence="8">4.4 uM for cGMP</KM>
        <Vmax evidence="8">507.0 nmol/min/mg enzyme for cAMP</Vmax>
        <Vmax evidence="8">1860.0 nmol/min/mg enzyme for cGMP</Vmax>
    </kinetics>
</comment>
<comment type="pathway">
    <text evidence="4 5 7 8 11">Purine metabolism; 3',5'-cyclic AMP degradation; AMP from 3',5'-cyclic AMP: step 1/1.</text>
</comment>
<comment type="pathway">
    <text evidence="4 5 8 11">Purine metabolism; 3',5'-cyclic GMP degradation; GMP from 3',5'-cyclic GMP: step 1/1.</text>
</comment>
<comment type="subunit">
    <text evidence="9">Homodimer.</text>
</comment>
<comment type="subcellular location">
    <subcellularLocation>
        <location evidence="4 6">Cytoplasm</location>
        <location evidence="4 6">Cytosol</location>
    </subcellularLocation>
</comment>
<comment type="alternative products">
    <event type="alternative splicing"/>
    <event type="alternative initiation"/>
    <isoform>
        <id>Q9Y233-3</id>
        <name>3</name>
        <sequence type="displayed"/>
    </isoform>
    <isoform>
        <id>Q9Y233-1</id>
        <name>PDE10A1</name>
        <sequence type="described" ref="VSP_062215"/>
    </isoform>
    <isoform>
        <id>Q9Y233-2</id>
        <name>PDE10A2</name>
        <sequence type="described" ref="VSP_062216"/>
    </isoform>
</comment>
<comment type="tissue specificity">
    <text evidence="4 11">Abundant in the putamen and caudate nucleus regions of brain and testis, moderately expressed in the thyroid gland, pituitary gland, thalamus and cerebellum.</text>
</comment>
<comment type="domain">
    <text evidence="7">The tandem GAF domains bind cAMP, and regulate enzyme activity. The binding of cAMP stimulates enzyme activity.</text>
</comment>
<comment type="domain">
    <text evidence="8 9">Composed of a C-terminal catalytic domain containing two divalent metal sites and an N-terminal regulatory domain which contains one cyclic nucleotide-binding region.</text>
</comment>
<comment type="PTM">
    <molecule>Isoform PDE10A2</molecule>
    <text evidence="6">Phosphorylated on Thr-16.</text>
</comment>
<comment type="disease" evidence="10">
    <disease id="DI-04707">
        <name>Dyskinesia, limb and orofacial, infantile-onset</name>
        <acronym>IOLOD</acronym>
        <description>An autosomal recessive, early-onset hyperkinetic movement disorder characterized by axial hypotonia, dyskinesia of the limbs and trunk, orofacial dyskinesia, drooling, and dysarthria. The severity of the hyperkinesis is variable.</description>
        <dbReference type="MIM" id="616921"/>
    </disease>
    <text>The disease is caused by variants affecting the gene represented in this entry.</text>
</comment>
<comment type="disease" evidence="11">
    <disease id="DI-04708">
        <name>Striatal degeneration, autosomal dominant 2</name>
        <acronym>ADSD2</acronym>
        <description>An autosomal dominant disorder characterized by striatal degeneration and dysfunction of basal ganglia, resulting in hyperkinesis.</description>
        <dbReference type="MIM" id="616922"/>
    </disease>
    <text>The disease is caused by variants affecting the gene represented in this entry.</text>
</comment>
<comment type="miscellaneous">
    <molecule>Isoform 3</molecule>
    <text evidence="12">Produced by alternative initiation. Based on proteomic data.</text>
</comment>
<comment type="similarity">
    <text evidence="12">Belongs to the cyclic nucleotide phosphodiesterase family.</text>
</comment>
<proteinExistence type="evidence at protein level"/>
<accession>Q9Y233</accession>
<accession>A0A3F2YP58</accession>
<accession>Q6FHX1</accession>
<accession>Q9HCP9</accession>
<accession>Q9NTV4</accession>
<accession>Q9ULW9</accession>
<accession>Q9Y5T1</accession>